<accession>Q02817</accession>
<accession>Q14878</accession>
<feature type="signal peptide" evidence="3">
    <location>
        <begin position="1"/>
        <end position="20"/>
    </location>
</feature>
<feature type="chain" id="PRO_0000019281" description="Mucin-2">
    <location>
        <begin position="21"/>
        <end position="5289"/>
    </location>
</feature>
<feature type="domain" description="VWFD 1" evidence="6">
    <location>
        <begin position="35"/>
        <end position="207"/>
    </location>
</feature>
<feature type="domain" description="TIL">
    <location>
        <begin position="295"/>
        <end position="351"/>
    </location>
</feature>
<feature type="domain" description="VWFD 2" evidence="6">
    <location>
        <begin position="389"/>
        <end position="564"/>
    </location>
</feature>
<feature type="domain" description="VWFD 3" evidence="6">
    <location>
        <begin position="858"/>
        <end position="1028"/>
    </location>
</feature>
<feature type="repeat" description="1">
    <location>
        <begin position="1401"/>
        <end position="1416"/>
    </location>
</feature>
<feature type="repeat" description="2">
    <location>
        <begin position="1417"/>
        <end position="1432"/>
    </location>
</feature>
<feature type="repeat" description="3">
    <location>
        <begin position="1433"/>
        <end position="1448"/>
    </location>
</feature>
<feature type="repeat" description="4">
    <location>
        <begin position="1449"/>
        <end position="1464"/>
    </location>
</feature>
<feature type="repeat" description="5">
    <location>
        <begin position="1465"/>
        <end position="1471"/>
    </location>
</feature>
<feature type="repeat" description="6">
    <location>
        <begin position="1472"/>
        <end position="1478"/>
    </location>
</feature>
<feature type="repeat" description="7A">
    <location>
        <begin position="1479"/>
        <end position="1494"/>
    </location>
</feature>
<feature type="repeat" description="7B">
    <location>
        <begin position="1495"/>
        <end position="1517"/>
    </location>
</feature>
<feature type="repeat" description="8A">
    <location>
        <begin position="1518"/>
        <end position="1533"/>
    </location>
</feature>
<feature type="repeat" description="8B">
    <location>
        <begin position="1534"/>
        <end position="1556"/>
    </location>
</feature>
<feature type="repeat" description="9A">
    <location>
        <begin position="1557"/>
        <end position="1572"/>
    </location>
</feature>
<feature type="repeat" description="9B">
    <location>
        <begin position="1573"/>
        <end position="1596"/>
    </location>
</feature>
<feature type="repeat" description="10A">
    <location>
        <begin position="1597"/>
        <end position="1612"/>
    </location>
</feature>
<feature type="repeat" description="10B">
    <location>
        <begin position="1613"/>
        <end position="1635"/>
    </location>
</feature>
<feature type="repeat" description="11A">
    <location>
        <begin position="1636"/>
        <end position="1651"/>
    </location>
</feature>
<feature type="repeat" description="11B">
    <location>
        <begin position="1652"/>
        <end position="1675"/>
    </location>
</feature>
<feature type="repeat" description="12">
    <location>
        <begin position="1676"/>
        <end position="1683"/>
    </location>
</feature>
<feature type="repeat" description="13">
    <location>
        <begin position="1684"/>
        <end position="1699"/>
    </location>
</feature>
<feature type="repeat" description="14">
    <location>
        <begin position="1700"/>
        <end position="1715"/>
    </location>
</feature>
<feature type="repeat" description="15">
    <location>
        <begin position="1716"/>
        <end position="1731"/>
    </location>
</feature>
<feature type="repeat" description="16">
    <location>
        <begin position="1732"/>
        <end position="1747"/>
    </location>
</feature>
<feature type="domain" description="VWFD 4" evidence="6">
    <location>
        <begin position="4589"/>
        <end position="4772"/>
    </location>
</feature>
<feature type="domain" description="VWFC 1" evidence="5">
    <location>
        <begin position="4927"/>
        <end position="4996"/>
    </location>
</feature>
<feature type="domain" description="VWFC 2" evidence="5">
    <location>
        <begin position="5034"/>
        <end position="5101"/>
    </location>
</feature>
<feature type="domain" description="CTCK" evidence="4">
    <location>
        <begin position="5185"/>
        <end position="5270"/>
    </location>
</feature>
<feature type="region of interest" description="Disordered" evidence="7">
    <location>
        <begin position="1399"/>
        <end position="1773"/>
    </location>
</feature>
<feature type="region of interest" description="Approximate repeats">
    <location>
        <begin position="1401"/>
        <end position="1747"/>
    </location>
</feature>
<feature type="region of interest" description="Disordered" evidence="7">
    <location>
        <begin position="1885"/>
        <end position="4238"/>
    </location>
</feature>
<feature type="region of interest" description="Disordered" evidence="7">
    <location>
        <begin position="4269"/>
        <end position="4430"/>
    </location>
</feature>
<feature type="region of interest" description="Disordered" evidence="7">
    <location>
        <begin position="4492"/>
        <end position="4524"/>
    </location>
</feature>
<feature type="region of interest" description="Disordered" evidence="7">
    <location>
        <begin position="4770"/>
        <end position="4795"/>
    </location>
</feature>
<feature type="compositionally biased region" description="Pro residues" evidence="7">
    <location>
        <begin position="1399"/>
        <end position="1411"/>
    </location>
</feature>
<feature type="compositionally biased region" description="Pro residues" evidence="7">
    <location>
        <begin position="1419"/>
        <end position="1510"/>
    </location>
</feature>
<feature type="compositionally biased region" description="Pro residues" evidence="7">
    <location>
        <begin position="1520"/>
        <end position="1549"/>
    </location>
</feature>
<feature type="compositionally biased region" description="Pro residues" evidence="7">
    <location>
        <begin position="1559"/>
        <end position="1628"/>
    </location>
</feature>
<feature type="compositionally biased region" description="Pro residues" evidence="7">
    <location>
        <begin position="1638"/>
        <end position="1679"/>
    </location>
</feature>
<feature type="compositionally biased region" description="Low complexity" evidence="7">
    <location>
        <begin position="1680"/>
        <end position="1720"/>
    </location>
</feature>
<feature type="compositionally biased region" description="Low complexity" evidence="7">
    <location>
        <begin position="1741"/>
        <end position="1759"/>
    </location>
</feature>
<feature type="compositionally biased region" description="Pro residues" evidence="7">
    <location>
        <begin position="1760"/>
        <end position="1770"/>
    </location>
</feature>
<feature type="compositionally biased region" description="Low complexity" evidence="7">
    <location>
        <begin position="1885"/>
        <end position="2158"/>
    </location>
</feature>
<feature type="compositionally biased region" description="Low complexity" evidence="7">
    <location>
        <begin position="2165"/>
        <end position="4238"/>
    </location>
</feature>
<feature type="compositionally biased region" description="Low complexity" evidence="7">
    <location>
        <begin position="4269"/>
        <end position="4315"/>
    </location>
</feature>
<feature type="compositionally biased region" description="Low complexity" evidence="7">
    <location>
        <begin position="4329"/>
        <end position="4430"/>
    </location>
</feature>
<feature type="compositionally biased region" description="Low complexity" evidence="7">
    <location>
        <begin position="4496"/>
        <end position="4511"/>
    </location>
</feature>
<feature type="compositionally biased region" description="Pro residues" evidence="7">
    <location>
        <begin position="4512"/>
        <end position="4522"/>
    </location>
</feature>
<feature type="binding site" evidence="18">
    <location>
        <position position="34"/>
    </location>
    <ligand>
        <name>Cu(2+)</name>
        <dbReference type="ChEBI" id="CHEBI:29036"/>
    </ligand>
</feature>
<feature type="binding site" evidence="17 29">
    <location>
        <position position="49"/>
    </location>
    <ligand>
        <name>Ca(2+)</name>
        <dbReference type="ChEBI" id="CHEBI:29108"/>
        <label>1</label>
    </ligand>
</feature>
<feature type="binding site" evidence="23">
    <location>
        <position position="146"/>
    </location>
    <ligand>
        <name>Cu(+)</name>
        <dbReference type="ChEBI" id="CHEBI:49552"/>
    </ligand>
</feature>
<feature type="binding site" evidence="23">
    <location>
        <position position="154"/>
    </location>
    <ligand>
        <name>Cu(+)</name>
        <dbReference type="ChEBI" id="CHEBI:49552"/>
    </ligand>
</feature>
<feature type="binding site" evidence="18">
    <location>
        <position position="156"/>
    </location>
    <ligand>
        <name>Cu(2+)</name>
        <dbReference type="ChEBI" id="CHEBI:29036"/>
    </ligand>
</feature>
<feature type="binding site" evidence="16 28">
    <location>
        <position position="171"/>
    </location>
    <ligand>
        <name>Ca(2+)</name>
        <dbReference type="ChEBI" id="CHEBI:29108"/>
        <label>1</label>
    </ligand>
</feature>
<feature type="binding site" evidence="16 17 28 29">
    <location>
        <position position="173"/>
    </location>
    <ligand>
        <name>Ca(2+)</name>
        <dbReference type="ChEBI" id="CHEBI:29108"/>
        <label>1</label>
    </ligand>
</feature>
<feature type="binding site" evidence="16 17 28 29">
    <location>
        <position position="175"/>
    </location>
    <ligand>
        <name>Ca(2+)</name>
        <dbReference type="ChEBI" id="CHEBI:29108"/>
        <label>1</label>
    </ligand>
</feature>
<feature type="binding site" evidence="16 17 28 29">
    <location>
        <position position="180"/>
    </location>
    <ligand>
        <name>Ca(2+)</name>
        <dbReference type="ChEBI" id="CHEBI:29108"/>
        <label>1</label>
    </ligand>
</feature>
<feature type="binding site" evidence="18">
    <location>
        <position position="277"/>
    </location>
    <ligand>
        <name>Cu(2+)</name>
        <dbReference type="ChEBI" id="CHEBI:29036"/>
    </ligand>
</feature>
<feature type="binding site" evidence="18">
    <location>
        <position position="324"/>
    </location>
    <ligand>
        <name>Cu(2+)</name>
        <dbReference type="ChEBI" id="CHEBI:29036"/>
    </ligand>
</feature>
<feature type="binding site" evidence="23">
    <location>
        <position position="326"/>
    </location>
    <ligand>
        <name>Cu(+)</name>
        <dbReference type="ChEBI" id="CHEBI:49552"/>
    </ligand>
</feature>
<feature type="binding site" evidence="17 29">
    <location>
        <position position="403"/>
    </location>
    <ligand>
        <name>Ca(2+)</name>
        <dbReference type="ChEBI" id="CHEBI:29108"/>
        <label>2</label>
    </ligand>
</feature>
<feature type="binding site" evidence="16 17 28 29">
    <location>
        <position position="530"/>
    </location>
    <ligand>
        <name>Ca(2+)</name>
        <dbReference type="ChEBI" id="CHEBI:29108"/>
        <label>2</label>
    </ligand>
</feature>
<feature type="binding site" evidence="16 17 28 29">
    <location>
        <position position="532"/>
    </location>
    <ligand>
        <name>Ca(2+)</name>
        <dbReference type="ChEBI" id="CHEBI:29108"/>
        <label>2</label>
    </ligand>
</feature>
<feature type="binding site" evidence="16 17 28 29">
    <location>
        <position position="534"/>
    </location>
    <ligand>
        <name>Ca(2+)</name>
        <dbReference type="ChEBI" id="CHEBI:29108"/>
        <label>2</label>
    </ligand>
</feature>
<feature type="binding site" evidence="16 17 28 29">
    <location>
        <position position="537"/>
    </location>
    <ligand>
        <name>Ca(2+)</name>
        <dbReference type="ChEBI" id="CHEBI:29108"/>
        <label>2</label>
    </ligand>
</feature>
<feature type="binding site" evidence="16 17 28 29">
    <location>
        <position position="538"/>
    </location>
    <ligand>
        <name>Ca(2+)</name>
        <dbReference type="ChEBI" id="CHEBI:29108"/>
        <label>2</label>
    </ligand>
</feature>
<feature type="binding site" evidence="15 17 25 29">
    <location>
        <position position="872"/>
    </location>
    <ligand>
        <name>Ca(2+)</name>
        <dbReference type="ChEBI" id="CHEBI:29108"/>
        <label>3</label>
    </ligand>
</feature>
<feature type="binding site" evidence="15 16 17 25 28 29">
    <location>
        <position position="994"/>
    </location>
    <ligand>
        <name>Ca(2+)</name>
        <dbReference type="ChEBI" id="CHEBI:29108"/>
        <label>3</label>
    </ligand>
</feature>
<feature type="binding site" evidence="15 16 17 25 28 29">
    <location>
        <position position="996"/>
    </location>
    <ligand>
        <name>Ca(2+)</name>
        <dbReference type="ChEBI" id="CHEBI:29108"/>
        <label>3</label>
    </ligand>
</feature>
<feature type="binding site" evidence="15 16 17 25 28 29">
    <location>
        <position position="998"/>
    </location>
    <ligand>
        <name>Ca(2+)</name>
        <dbReference type="ChEBI" id="CHEBI:29108"/>
        <label>3</label>
    </ligand>
</feature>
<feature type="binding site" evidence="15 16 17 25 28 29">
    <location>
        <position position="1001"/>
    </location>
    <ligand>
        <name>Ca(2+)</name>
        <dbReference type="ChEBI" id="CHEBI:29108"/>
        <label>3</label>
    </ligand>
</feature>
<feature type="binding site" evidence="15 16 17 25 28 29">
    <location>
        <position position="1002"/>
    </location>
    <ligand>
        <name>Ca(2+)</name>
        <dbReference type="ChEBI" id="CHEBI:29108"/>
        <label>3</label>
    </ligand>
</feature>
<feature type="binding site" evidence="16 26 28">
    <location>
        <position position="1310"/>
    </location>
    <ligand>
        <name>Ca(2+)</name>
        <dbReference type="ChEBI" id="CHEBI:29108"/>
        <label>5</label>
    </ligand>
</feature>
<feature type="binding site" evidence="16 26 28">
    <location>
        <position position="1312"/>
    </location>
    <ligand>
        <name>Ca(2+)</name>
        <dbReference type="ChEBI" id="CHEBI:29108"/>
        <label>4</label>
    </ligand>
</feature>
<feature type="binding site" evidence="16 26 28">
    <location>
        <position position="1312"/>
    </location>
    <ligand>
        <name>Ca(2+)</name>
        <dbReference type="ChEBI" id="CHEBI:29108"/>
        <label>5</label>
    </ligand>
</feature>
<feature type="binding site" evidence="16 26 28">
    <location>
        <position position="1313"/>
    </location>
    <ligand>
        <name>Ca(2+)</name>
        <dbReference type="ChEBI" id="CHEBI:29108"/>
        <label>4</label>
    </ligand>
</feature>
<feature type="binding site" evidence="16 26 28">
    <location>
        <position position="1316"/>
    </location>
    <ligand>
        <name>Ca(2+)</name>
        <dbReference type="ChEBI" id="CHEBI:29108"/>
        <label>4</label>
    </ligand>
</feature>
<feature type="binding site" evidence="16 26 28">
    <location>
        <position position="1319"/>
    </location>
    <ligand>
        <name>Ca(2+)</name>
        <dbReference type="ChEBI" id="CHEBI:29108"/>
        <label>4</label>
    </ligand>
</feature>
<feature type="binding site" evidence="16 26 28">
    <location>
        <position position="1321"/>
    </location>
    <ligand>
        <name>Ca(2+)</name>
        <dbReference type="ChEBI" id="CHEBI:29108"/>
        <label>4</label>
    </ligand>
</feature>
<feature type="binding site" evidence="16 26 28">
    <location>
        <position position="1322"/>
    </location>
    <ligand>
        <name>Ca(2+)</name>
        <dbReference type="ChEBI" id="CHEBI:29108"/>
        <label>5</label>
    </ligand>
</feature>
<feature type="binding site" evidence="16 26 28">
    <location>
        <position position="1324"/>
    </location>
    <ligand>
        <name>Ca(2+)</name>
        <dbReference type="ChEBI" id="CHEBI:29108"/>
        <label>5</label>
    </ligand>
</feature>
<feature type="binding site" evidence="16 26 28">
    <location>
        <position position="1381"/>
    </location>
    <ligand>
        <name>Ca(2+)</name>
        <dbReference type="ChEBI" id="CHEBI:29108"/>
        <label>5</label>
    </ligand>
</feature>
<feature type="binding site" evidence="16 26 28">
    <location>
        <position position="1382"/>
    </location>
    <ligand>
        <name>Ca(2+)</name>
        <dbReference type="ChEBI" id="CHEBI:29108"/>
        <label>5</label>
    </ligand>
</feature>
<feature type="site" description="Cleavage; by autolysis; in vitro" evidence="10">
    <location>
        <begin position="4596"/>
        <end position="4597"/>
    </location>
</feature>
<feature type="modified residue" description="Phosphoserine" evidence="31">
    <location>
        <position position="21"/>
    </location>
</feature>
<feature type="glycosylation site" description="N-linked (GlcNAc...) asparagine" evidence="16 17 28 29">
    <location>
        <position position="163"/>
    </location>
</feature>
<feature type="glycosylation site" description="N-linked (GlcNAc...) asparagine" evidence="3">
    <location>
        <position position="423"/>
    </location>
</feature>
<feature type="glycosylation site" description="N-linked (GlcNAc...) asparagine" evidence="16 17 28 29">
    <location>
        <position position="670"/>
    </location>
</feature>
<feature type="glycosylation site" description="N-linked (GlcNAc...) asparagine" evidence="3">
    <location>
        <position position="770"/>
    </location>
</feature>
<feature type="glycosylation site" description="N-linked (GlcNAc...) asparagine" evidence="15 25">
    <location>
        <position position="894"/>
    </location>
</feature>
<feature type="glycosylation site" description="N-linked (GlcNAc...) asparagine" evidence="3">
    <location>
        <position position="1139"/>
    </location>
</feature>
<feature type="glycosylation site" description="N-linked (GlcNAc...) asparagine" evidence="15 16 17 25 28 29">
    <location>
        <position position="1154"/>
    </location>
</feature>
<feature type="glycosylation site" description="N-linked (GlcNAc...) asparagine" evidence="3">
    <location>
        <position position="1215"/>
    </location>
</feature>
<feature type="glycosylation site" description="N-linked (GlcNAc...) asparagine" evidence="3">
    <location>
        <position position="1230"/>
    </location>
</feature>
<feature type="glycosylation site" description="N-linked (GlcNAc...) asparagine" evidence="3">
    <location>
        <position position="1246"/>
    </location>
</feature>
<feature type="glycosylation site" description="O-linked (GalNAc) threonine" evidence="16">
    <location>
        <position position="1266"/>
    </location>
</feature>
<feature type="glycosylation site" description="O-linked (GalNAc) threonine" evidence="16">
    <location>
        <position position="1267"/>
    </location>
</feature>
<feature type="glycosylation site" description="O-linked (GalNAc) threonine" evidence="16">
    <location>
        <position position="1269"/>
    </location>
</feature>
<feature type="glycosylation site" description="O-linked (GalNAc) threonine" evidence="16">
    <location>
        <position position="1270"/>
    </location>
</feature>
<feature type="glycosylation site" description="O-linked (GalNAc) threonine" evidence="16">
    <location>
        <position position="1272"/>
    </location>
</feature>
<feature type="glycosylation site" description="O-linked (GalNAc) threonine" evidence="16">
    <location>
        <position position="1275"/>
    </location>
</feature>
<feature type="glycosylation site" description="O-linked (GalNAc) threonine" evidence="16">
    <location>
        <position position="1276"/>
    </location>
</feature>
<feature type="glycosylation site" description="O-linked (GalNAc) threonine" evidence="16">
    <location>
        <position position="1281"/>
    </location>
</feature>
<feature type="glycosylation site" description="O-linked (GalNAc) threonine" evidence="16">
    <location>
        <position position="1282"/>
    </location>
</feature>
<feature type="glycosylation site" description="O-linked (GalNAc) threonine" evidence="16">
    <location>
        <position position="1287"/>
    </location>
</feature>
<feature type="glycosylation site" description="O-linked (GalNAc) serine" evidence="16">
    <location>
        <position position="1291"/>
    </location>
</feature>
<feature type="glycosylation site" description="O-linked (GalNAc) serine" evidence="16">
    <location>
        <position position="1292"/>
    </location>
</feature>
<feature type="glycosylation site" description="O-linked (GalNAc) threonine" evidence="16">
    <location>
        <position position="1293"/>
    </location>
</feature>
<feature type="glycosylation site" description="O-linked (GalNAc) serine" evidence="16">
    <location>
        <position position="1296"/>
    </location>
</feature>
<feature type="glycosylation site" description="O-linked (GalNAc) threonine" evidence="16">
    <location>
        <position position="1297"/>
    </location>
</feature>
<feature type="glycosylation site" description="N-linked (GlcNAc...) asparagine" evidence="3">
    <location>
        <position position="1787"/>
    </location>
</feature>
<feature type="glycosylation site" description="N-linked (GlcNAc...) asparagine" evidence="3">
    <location>
        <position position="1820"/>
    </location>
</feature>
<feature type="glycosylation site" description="N-linked (GlcNAc...) asparagine" evidence="3">
    <location>
        <position position="4449"/>
    </location>
</feature>
<feature type="glycosylation site" description="N-linked (GlcNAc...) asparagine" evidence="3">
    <location>
        <position position="4461"/>
    </location>
</feature>
<feature type="glycosylation site" description="N-linked (GlcNAc...) asparagine" evidence="3">
    <location>
        <position position="4472"/>
    </location>
</feature>
<feature type="glycosylation site" description="N-linked (GlcNAc...) asparagine" evidence="3">
    <location>
        <position position="4483"/>
    </location>
</feature>
<feature type="glycosylation site" description="N-linked (GlcNAc...) asparagine" evidence="3">
    <location>
        <position position="4532"/>
    </location>
</feature>
<feature type="glycosylation site" description="N-linked (GlcNAc...) asparagine" evidence="3">
    <location>
        <position position="4548"/>
    </location>
</feature>
<feature type="glycosylation site" description="N-linked (GlcNAc...) asparagine" evidence="3">
    <location>
        <position position="4612"/>
    </location>
</feature>
<feature type="glycosylation site" description="N-linked (GlcNAc...) asparagine" evidence="3">
    <location>
        <position position="4726"/>
    </location>
</feature>
<feature type="glycosylation site" description="N-linked (GlcNAc...) asparagine" evidence="3">
    <location>
        <position position="4737"/>
    </location>
</feature>
<feature type="glycosylation site" description="N-linked (GlcNAc...) asparagine" evidence="3">
    <location>
        <position position="4862"/>
    </location>
</feature>
<feature type="glycosylation site" description="N-linked (GlcNAc...) asparagine" evidence="3">
    <location>
        <position position="4897"/>
    </location>
</feature>
<feature type="glycosylation site" description="N-linked (GlcNAc...) asparagine" evidence="3">
    <location>
        <position position="4991"/>
    </location>
</feature>
<feature type="glycosylation site" description="N-linked (GlcNAc...) asparagine" evidence="3">
    <location>
        <position position="4998"/>
    </location>
</feature>
<feature type="glycosylation site" description="N-linked (GlcNAc...) asparagine" evidence="3">
    <location>
        <position position="5065"/>
    </location>
</feature>
<feature type="glycosylation site" description="N-linked (GlcNAc...) asparagine" evidence="3">
    <location>
        <position position="5080"/>
    </location>
</feature>
<feature type="glycosylation site" description="N-linked (GlcNAc...) asparagine" evidence="3">
    <location>
        <position position="5129"/>
    </location>
</feature>
<feature type="glycosylation site" description="N-linked (GlcNAc...) asparagine" evidence="3">
    <location>
        <position position="5148"/>
    </location>
</feature>
<feature type="glycosylation site" description="N-linked (GlcNAc...) asparagine" evidence="3">
    <location>
        <position position="5179"/>
    </location>
</feature>
<feature type="disulfide bond" evidence="6 16 17 29 30">
    <location>
        <begin position="37"/>
        <end position="169"/>
    </location>
</feature>
<feature type="disulfide bond" evidence="6 16 17 29 30">
    <location>
        <begin position="59"/>
        <end position="206"/>
    </location>
</feature>
<feature type="disulfide bond" evidence="16 17 29 30">
    <location>
        <begin position="67"/>
        <end position="166"/>
    </location>
</feature>
<feature type="disulfide bond" evidence="16 17 29 30">
    <location>
        <begin position="218"/>
        <end position="255"/>
    </location>
</feature>
<feature type="disulfide bond" evidence="16 17 29 30">
    <location>
        <begin position="225"/>
        <end position="250"/>
    </location>
</feature>
<feature type="disulfide bond" evidence="16 17 29 30">
    <location>
        <begin position="237"/>
        <end position="275"/>
    </location>
</feature>
<feature type="disulfide bond" evidence="16 17 29 30">
    <location>
        <begin position="257"/>
        <end position="263"/>
    </location>
</feature>
<feature type="disulfide bond" evidence="16 17 29 30">
    <location>
        <begin position="265"/>
        <end position="291"/>
    </location>
</feature>
<feature type="disulfide bond" evidence="16 17 29 30">
    <location>
        <begin position="295"/>
        <end position="329"/>
    </location>
</feature>
<feature type="disulfide bond" evidence="16 17 29 30">
    <location>
        <begin position="308"/>
        <end position="321"/>
    </location>
</feature>
<feature type="disulfide bond" evidence="16 17 29 30">
    <location>
        <begin position="312"/>
        <end position="351"/>
    </location>
</feature>
<feature type="disulfide bond" evidence="16 17 29 30">
    <location>
        <begin position="331"/>
        <end position="345"/>
    </location>
</feature>
<feature type="disulfide bond" evidence="16 17 29 30">
    <location>
        <begin position="353"/>
        <end position="375"/>
    </location>
</feature>
<feature type="disulfide bond" evidence="16 17 29 30">
    <location>
        <begin position="370"/>
        <end position="387"/>
    </location>
</feature>
<feature type="disulfide bond" evidence="16 17 29 30">
    <location>
        <begin position="373"/>
        <end position="382"/>
    </location>
</feature>
<feature type="disulfide bond" evidence="6 16 17 29 30">
    <location>
        <begin position="391"/>
        <end position="528"/>
    </location>
</feature>
<feature type="disulfide bond" evidence="6 17 29 30">
    <location>
        <begin position="413"/>
        <end position="563"/>
    </location>
</feature>
<feature type="disulfide bond" evidence="6 16 17 29 30">
    <location>
        <begin position="435"/>
        <end position="443"/>
    </location>
</feature>
<feature type="disulfide bond" evidence="16 17 29 30">
    <location>
        <begin position="574"/>
        <end position="619"/>
    </location>
</feature>
<feature type="disulfide bond" evidence="16 17 29 30">
    <location>
        <begin position="588"/>
        <end position="614"/>
    </location>
</feature>
<feature type="disulfide bond" evidence="16 17 29 30">
    <location>
        <begin position="601"/>
        <end position="639"/>
    </location>
</feature>
<feature type="disulfide bond" evidence="16 17 29 30">
    <location>
        <begin position="621"/>
        <end position="627"/>
    </location>
</feature>
<feature type="disulfide bond" evidence="16 17 29 30">
    <location>
        <begin position="629"/>
        <end position="654"/>
    </location>
</feature>
<feature type="disulfide bond" evidence="16 17 29 30">
    <location>
        <begin position="661"/>
        <end position="698"/>
    </location>
</feature>
<feature type="disulfide bond" evidence="16 17 29 30">
    <location>
        <begin position="674"/>
        <end position="688"/>
    </location>
</feature>
<feature type="disulfide bond" evidence="16 17 29 30">
    <location>
        <begin position="678"/>
        <end position="718"/>
    </location>
</feature>
<feature type="disulfide bond" evidence="16 17 29 30">
    <location>
        <begin position="700"/>
        <end position="712"/>
    </location>
</feature>
<feature type="disulfide bond" evidence="16 17 29 30">
    <location>
        <begin position="720"/>
        <end position="742"/>
    </location>
</feature>
<feature type="disulfide bond" evidence="16 17 29 30">
    <location>
        <begin position="740"/>
        <end position="749"/>
    </location>
</feature>
<feature type="disulfide bond" evidence="16 17 29 30">
    <location>
        <begin position="784"/>
        <end position="820"/>
    </location>
</feature>
<feature type="disulfide bond" evidence="16 17 29 30">
    <location>
        <begin position="802"/>
        <end position="814"/>
    </location>
</feature>
<feature type="disulfide bond" evidence="16 17 29 30">
    <location>
        <begin position="822"/>
        <end position="844"/>
    </location>
</feature>
<feature type="disulfide bond" evidence="16 17 29 30">
    <location>
        <begin position="839"/>
        <end position="856"/>
    </location>
</feature>
<feature type="disulfide bond" evidence="16 17 29 30">
    <location>
        <begin position="842"/>
        <end position="851"/>
    </location>
</feature>
<feature type="disulfide bond" evidence="6 15 16 17 25 29 30">
    <location>
        <begin position="860"/>
        <end position="992"/>
    </location>
</feature>
<feature type="disulfide bond" evidence="6 15 16 17 25 29 30">
    <location>
        <begin position="882"/>
        <end position="1027"/>
    </location>
</feature>
<feature type="disulfide bond" evidence="6 15 16 17 25 29 30">
    <location>
        <begin position="891"/>
        <end position="989"/>
    </location>
</feature>
<feature type="disulfide bond" evidence="6 15 16 17 25 29 30">
    <location>
        <begin position="909"/>
        <end position="916"/>
    </location>
</feature>
<feature type="disulfide bond" evidence="15 16 17 25 29 30">
    <location>
        <begin position="1037"/>
        <end position="1080"/>
    </location>
</feature>
<feature type="disulfide bond" evidence="15 16 17 25 29 30">
    <location>
        <begin position="1051"/>
        <end position="1075"/>
    </location>
</feature>
<feature type="disulfide bond" evidence="15 16 17 25 29 30">
    <location>
        <begin position="1062"/>
        <end position="1102"/>
    </location>
</feature>
<feature type="disulfide bond" evidence="15 16 17 25 29 30">
    <location>
        <begin position="1082"/>
        <end position="1090"/>
    </location>
</feature>
<feature type="disulfide bond" description="Interchain" evidence="16">
    <location>
        <position position="1088"/>
    </location>
</feature>
<feature type="disulfide bond" evidence="15 16 17 25 29 30">
    <location>
        <begin position="1092"/>
        <end position="1117"/>
    </location>
</feature>
<feature type="disulfide bond" evidence="15 16 17 25 29 30">
    <location>
        <begin position="1108"/>
        <end position="1137"/>
    </location>
</feature>
<feature type="disulfide bond" evidence="15 16 17 25 29 30">
    <location>
        <begin position="1121"/>
        <end position="1163"/>
    </location>
</feature>
<feature type="disulfide bond" description="Interchain" evidence="16 17 29">
    <location>
        <position position="1130"/>
    </location>
</feature>
<feature type="disulfide bond" evidence="15 16 17 25 29 30">
    <location>
        <begin position="1145"/>
        <end position="1187"/>
    </location>
</feature>
<feature type="disulfide bond" evidence="15 16 17 25 29 30">
    <location>
        <begin position="1167"/>
        <end position="1181"/>
    </location>
</feature>
<feature type="disulfide bond" evidence="15 16 17 25 29 30">
    <location>
        <begin position="1189"/>
        <end position="1213"/>
    </location>
</feature>
<feature type="disulfide bond" evidence="15 16 17 25 29 30">
    <location>
        <begin position="1208"/>
        <end position="1238"/>
    </location>
</feature>
<feature type="disulfide bond" evidence="15 16 17 25 29 30">
    <location>
        <begin position="1211"/>
        <end position="1221"/>
    </location>
</feature>
<feature type="disulfide bond" evidence="6">
    <location>
        <begin position="4591"/>
        <end position="4732"/>
    </location>
</feature>
<feature type="disulfide bond" evidence="6">
    <location>
        <begin position="4613"/>
        <end position="4771"/>
    </location>
</feature>
<feature type="disulfide bond" evidence="6">
    <location>
        <begin position="4637"/>
        <end position="4645"/>
    </location>
</feature>
<feature type="disulfide bond" evidence="4">
    <location>
        <begin position="5185"/>
        <end position="5232"/>
    </location>
</feature>
<feature type="disulfide bond" evidence="4">
    <location>
        <begin position="5199"/>
        <end position="5246"/>
    </location>
</feature>
<feature type="disulfide bond" evidence="4">
    <location>
        <begin position="5208"/>
        <end position="5262"/>
    </location>
</feature>
<feature type="disulfide bond" evidence="4">
    <location>
        <begin position="5212"/>
        <end position="5264"/>
    </location>
</feature>
<feature type="sequence variant" id="VAR_056582" description="In dbSNP:rs2856111.">
    <original>L</original>
    <variation>P</variation>
    <location>
        <position position="58"/>
    </location>
</feature>
<feature type="sequence variant" id="VAR_056583" description="In dbSNP:rs11825977.">
    <original>V</original>
    <variation>M</variation>
    <location>
        <position position="116"/>
    </location>
</feature>
<feature type="sequence variant" id="VAR_056584" description="In dbSNP:rs11245936.">
    <original>G</original>
    <variation>S</variation>
    <location>
        <position position="832"/>
    </location>
</feature>
<feature type="sequence variant" id="VAR_059531" description="In dbSNP:rs11245947.">
    <original>S</original>
    <variation>R</variation>
    <location>
        <position position="1619"/>
    </location>
</feature>
<feature type="sequence variant" id="VAR_059532" description="In dbSNP:rs11245949.">
    <original>P</original>
    <variation>L</variation>
    <location>
        <position position="1689"/>
    </location>
</feature>
<feature type="sequence variant" id="VAR_061487" description="In dbSNP:rs34493663.">
    <original>P</original>
    <variation>H</variation>
    <location>
        <position position="1768"/>
    </location>
</feature>
<feature type="sequence variant" id="VAR_059533" description="In dbSNP:rs6421972.">
    <original>I</original>
    <variation>T</variation>
    <location>
        <position position="2243"/>
    </location>
</feature>
<feature type="sequence variant" id="VAR_059534" description="In dbSNP:rs7480563.">
    <original>T</original>
    <variation>P</variation>
    <location>
        <position position="2613"/>
    </location>
</feature>
<feature type="sequence variant" id="VAR_059535" description="In dbSNP:rs7480563.">
    <original>T</original>
    <variation>S</variation>
    <location>
        <position position="2613"/>
    </location>
</feature>
<feature type="sequence variant" id="VAR_059536" description="In dbSNP:rs7126405.">
    <original>Q</original>
    <variation>L</variation>
    <location>
        <position position="2742"/>
    </location>
</feature>
<feature type="sequence variant" id="VAR_059537" description="In dbSNP:rs7126405.">
    <original>Q</original>
    <variation>P</variation>
    <location>
        <position position="2742"/>
    </location>
</feature>
<feature type="mutagenesis site" description="Decreased binding to Cu(2+)." evidence="18">
    <original>H</original>
    <variation>A</variation>
    <location>
        <position position="32"/>
    </location>
</feature>
<feature type="mutagenesis site" description="Slightly Decreased binding to Cu(2+)." evidence="18">
    <original>H</original>
    <variation>A</variation>
    <variation>R</variation>
    <location>
        <position position="34"/>
    </location>
</feature>
<feature type="mutagenesis site" description="Decreased binding to Cu(1+) without affecting binding to Cu(2+). Abolished binding to Cu(1+); when associated with L-154 and V-326." evidence="18">
    <original>M</original>
    <variation>L</variation>
    <location>
        <position position="146"/>
    </location>
</feature>
<feature type="mutagenesis site" description="Decreased binding to Cu(1+) without affecting binding to Cu(2+). Abolished binding to Cu(1+); when associated with L-146 and V-326." evidence="18">
    <original>M</original>
    <variation>L</variation>
    <location>
        <position position="154"/>
    </location>
</feature>
<feature type="mutagenesis site" description="Decreased binding to Cu(2+)." evidence="18">
    <original>H</original>
    <variation>A</variation>
    <location>
        <position position="277"/>
    </location>
</feature>
<feature type="mutagenesis site" description="Decreased binding to Cu(2+)." evidence="18">
    <original>E</original>
    <variation>A</variation>
    <location>
        <position position="322"/>
    </location>
</feature>
<feature type="mutagenesis site" description="Decreased binding to Cu(1+) without affecting binding to Cu(2+). Abolished binding to Cu(1+); when associated with L-146 and L-154." evidence="18">
    <original>M</original>
    <variation>V</variation>
    <location>
        <position position="326"/>
    </location>
</feature>
<feature type="mutagenesis site" description="Does not abolish homodimerization. Does not abolish ability to form filaments; when associated with A-1130." evidence="16">
    <original>C</original>
    <variation>A</variation>
    <location>
        <position position="1088"/>
    </location>
</feature>
<feature type="mutagenesis site" description="Impaired formation of intermolecular disulfide bonds; inducing a mixture of monomers and homodimers. Does not abolish ability to form filaments; when associated with A-1088." evidence="16">
    <original>C</original>
    <variation>A</variation>
    <location>
        <position position="1130"/>
    </location>
</feature>
<feature type="sequence conflict" description="In Ref. 1; AAB95295." evidence="22" ref="1">
    <original>NHGH</original>
    <variation>YHGR</variation>
    <location>
        <begin position="31"/>
        <end position="34"/>
    </location>
</feature>
<feature type="sequence conflict" description="In Ref. 1; AAB95295." evidence="22" ref="1">
    <original>V</original>
    <variation>A</variation>
    <location>
        <position position="457"/>
    </location>
</feature>
<feature type="sequence conflict" description="In Ref. 1; AAB95295." evidence="22" ref="1">
    <original>E</original>
    <variation>Q</variation>
    <location>
        <position position="470"/>
    </location>
</feature>
<feature type="sequence conflict" description="In Ref. 1; AAB95295." evidence="22" ref="1">
    <original>S</original>
    <variation>T</variation>
    <location>
        <position position="562"/>
    </location>
</feature>
<feature type="sequence conflict" description="In Ref. 1; AAB95295." evidence="22" ref="1">
    <original>T</original>
    <variation>S</variation>
    <location>
        <position position="1279"/>
    </location>
</feature>
<feature type="sequence conflict" description="In Ref. 1; AAB95295." evidence="22" ref="1">
    <original>T</original>
    <variation>P</variation>
    <location>
        <position position="1325"/>
    </location>
</feature>
<feature type="sequence conflict" description="In Ref. 1; AAB95295." evidence="22" ref="1">
    <original>L</original>
    <variation>H</variation>
    <location>
        <position position="1351"/>
    </location>
</feature>
<feature type="sequence conflict" description="In Ref. 1; AAB95295." evidence="22" ref="1">
    <original>S</original>
    <variation>T</variation>
    <location>
        <position position="1412"/>
    </location>
</feature>
<feature type="sequence conflict" description="In Ref. 1; AAB95295." evidence="22" ref="1">
    <original>P</original>
    <variation>L</variation>
    <location>
        <position position="1449"/>
    </location>
</feature>
<feature type="sequence conflict" description="In Ref. 1; AAB95295." evidence="22" ref="1">
    <original>T</original>
    <variation>M</variation>
    <location>
        <position position="1504"/>
    </location>
</feature>
<feature type="sequence conflict" description="In Ref. 1; AAB95295." evidence="22" ref="1">
    <original>T</original>
    <variation>PTTT</variation>
    <location>
        <position position="1896"/>
    </location>
</feature>
<feature type="sequence conflict" description="In Ref. 1; AAB95295." evidence="22" ref="1">
    <original>STQSTTP</original>
    <variation>GTQTPTT</variation>
    <location>
        <begin position="1912"/>
        <end position="1918"/>
    </location>
</feature>
<feature type="sequence conflict" description="In Ref. 1; AAB95295." evidence="22" ref="1">
    <original>N</original>
    <variation>T</variation>
    <location>
        <position position="1925"/>
    </location>
</feature>
<feature type="sequence conflict" description="In Ref. 1; AAB95295." evidence="22" ref="1">
    <original>PTPITTTTTMVTPTPTITSTQTPTPTPITTTTVTPTPTPTSTQRTTPTS</original>
    <variation>TTP</variation>
    <location>
        <begin position="1941"/>
        <end position="1989"/>
    </location>
</feature>
<feature type="sequence conflict" description="In Ref. 1; AAB95295." evidence="22" ref="1">
    <original>STTTM</original>
    <variation>TTTTT</variation>
    <location>
        <begin position="2037"/>
        <end position="2041"/>
    </location>
</feature>
<feature type="sequence conflict" description="In Ref. 1; AAB95295." evidence="22" ref="1">
    <original>LTP</original>
    <variation>PTT</variation>
    <location>
        <begin position="2054"/>
        <end position="2056"/>
    </location>
</feature>
<feature type="sequence conflict" description="In Ref. 1; AAB95295." evidence="22" ref="1">
    <original>STPIS</original>
    <variation>TTPIT</variation>
    <location>
        <begin position="2079"/>
        <end position="2083"/>
    </location>
</feature>
<feature type="sequence conflict" description="In Ref. 1; AAB95295." evidence="22" ref="1">
    <original>L</original>
    <variation>T</variation>
    <location>
        <position position="2102"/>
    </location>
</feature>
<feature type="sequence conflict" description="In Ref. 1; AAB95295." evidence="22" ref="1">
    <original>KSTTPTS</original>
    <variation>QTPTTTP</variation>
    <location>
        <begin position="2144"/>
        <end position="2150"/>
    </location>
</feature>
<feature type="sequence conflict" description="In Ref. 1; AAB95295." evidence="22" ref="1">
    <original>M</original>
    <variation>T</variation>
    <location>
        <position position="2156"/>
    </location>
</feature>
<feature type="sequence conflict" description="In Ref. 1; AAB95295." evidence="22" ref="1">
    <original>P</original>
    <variation>T</variation>
    <location>
        <position position="2162"/>
    </location>
</feature>
<feature type="sequence conflict" description="In Ref. 1; AAB95295." evidence="22" ref="1">
    <original>P</original>
    <variation>T</variation>
    <location>
        <position position="2194"/>
    </location>
</feature>
<feature type="sequence conflict" description="In Ref. 1; AAB95295." evidence="22" ref="1">
    <original>S</original>
    <variation>T</variation>
    <location>
        <position position="2217"/>
    </location>
</feature>
<feature type="sequence conflict" description="In Ref. 1; AAB95295." evidence="22" ref="1">
    <original>N</original>
    <variation>T</variation>
    <location>
        <position position="2223"/>
    </location>
</feature>
<feature type="sequence conflict" description="In Ref. 1; AAB95295." evidence="22" ref="1">
    <original>PSTTL</original>
    <variation>QTPTT</variation>
    <location>
        <begin position="2236"/>
        <end position="2240"/>
    </location>
</feature>
<feature type="sequence conflict" description="In Ref. 1; AAB95295." evidence="22" ref="1">
    <original>M</original>
    <variation>T</variation>
    <location>
        <position position="2248"/>
    </location>
</feature>
<feature type="sequence conflict" description="In Ref. 1; AAB95295." evidence="22" ref="1">
    <original>STPIS</original>
    <variation>TTPIT</variation>
    <location>
        <begin position="2263"/>
        <end position="2267"/>
    </location>
</feature>
<feature type="sequence conflict" description="In Ref. 1; AAB95295." evidence="22" ref="1">
    <original>PTPIS</original>
    <variation>TTPIT</variation>
    <location>
        <begin position="2286"/>
        <end position="2290"/>
    </location>
</feature>
<feature type="sequence conflict" description="In Ref. 1; AAB95295." evidence="22" ref="1">
    <original>S</original>
    <variation>G</variation>
    <location>
        <position position="2303"/>
    </location>
</feature>
<feature type="sequence conflict" description="In Ref. 1; AAB95295." evidence="22" ref="1">
    <original>N</original>
    <variation>T</variation>
    <location>
        <position position="2321"/>
    </location>
</feature>
<feature type="sequence conflict" description="In Ref. 1; AAB95295." evidence="22" ref="1">
    <original>S</original>
    <variation>T</variation>
    <location>
        <position position="2359"/>
    </location>
</feature>
<feature type="sequence conflict" description="In Ref. 1; AAB95295." evidence="22" ref="1">
    <original>A</original>
    <variation>P</variation>
    <location>
        <position position="2380"/>
    </location>
</feature>
<feature type="sequence conflict" description="In Ref. 1; AAB95295." evidence="22" ref="1">
    <original>S</original>
    <variation>T</variation>
    <location>
        <position position="2401"/>
    </location>
</feature>
<feature type="sequence conflict" description="In Ref. 1; AAB95295." evidence="22" ref="1">
    <original>STPISN</original>
    <variation>TTPITT</variation>
    <location>
        <begin position="2424"/>
        <end position="2429"/>
    </location>
</feature>
<feature type="sequence conflict" description="In Ref. 1; AAB95295." evidence="22" ref="1">
    <original>V</original>
    <variation>T</variation>
    <location>
        <position position="2447"/>
    </location>
</feature>
<feature type="sequence conflict" description="In Ref. 1; AAB95295." evidence="22" ref="1">
    <location>
        <begin position="2456"/>
        <end position="2478"/>
    </location>
</feature>
<feature type="sequence conflict" description="In Ref. 1; AAB95295." evidence="22" ref="1">
    <original>H</original>
    <variation>Q</variation>
    <location>
        <position position="2489"/>
    </location>
</feature>
<feature type="sequence conflict" description="In Ref. 1; AAB95295." evidence="22" ref="1">
    <original>P</original>
    <variation>T</variation>
    <location>
        <position position="2516"/>
    </location>
</feature>
<feature type="sequence conflict" description="In Ref. 1; AAB95295." evidence="22" ref="1">
    <original>S</original>
    <variation>T</variation>
    <location>
        <position position="2539"/>
    </location>
</feature>
<feature type="sequence conflict" description="In Ref. 1; AAB95295." evidence="22" ref="1">
    <original>N</original>
    <variation>T</variation>
    <location>
        <position position="2568"/>
    </location>
</feature>
<feature type="sequence conflict" description="In Ref. 1; AAB95295." evidence="22" ref="1">
    <original>VL</original>
    <variation>TP</variation>
    <location>
        <begin position="2586"/>
        <end position="2587"/>
    </location>
</feature>
<feature type="sequence conflict" description="In Ref. 1; AAB95295." evidence="22" ref="1">
    <original>M</original>
    <variation>V</variation>
    <location>
        <position position="2594"/>
    </location>
</feature>
<feature type="sequence conflict" description="In Ref. 1; AAB95295." evidence="22" ref="1">
    <original>STKSTTV</original>
    <variation>GTQTPTT</variation>
    <location>
        <begin position="2602"/>
        <end position="2608"/>
    </location>
</feature>
<feature type="sequence conflict" description="In Ref. 1; AAB95295." evidence="22" ref="1">
    <original>STTL</original>
    <variation>TPTT</variation>
    <location>
        <begin position="2628"/>
        <end position="2631"/>
    </location>
</feature>
<feature type="sequence conflict" description="In Ref. 1; AAB95295." evidence="22" ref="1">
    <original>S</original>
    <variation>T</variation>
    <location>
        <position position="2658"/>
    </location>
</feature>
<feature type="sequence conflict" description="In Ref. 1; AAB95295." evidence="22" ref="1">
    <original>I</original>
    <variation>T</variation>
    <location>
        <position position="2664"/>
    </location>
</feature>
<feature type="sequence conflict" description="In Ref. 1; AAB95295." evidence="22" ref="1">
    <original>S</original>
    <variation>T</variation>
    <location>
        <position position="2677"/>
    </location>
</feature>
<feature type="sequence conflict" description="In Ref. 1; AAB95295." evidence="22" ref="1">
    <original>STPIS</original>
    <variation>TTPIT</variation>
    <location>
        <begin position="2700"/>
        <end position="2704"/>
    </location>
</feature>
<feature type="sequence conflict" description="In Ref. 1; AAB95295." evidence="22" ref="1">
    <original>A</original>
    <variation>P</variation>
    <location>
        <position position="2713"/>
    </location>
</feature>
<feature type="sequence conflict" description="In Ref. 1; AAB95295." evidence="22" ref="1">
    <original>L</original>
    <variation>T</variation>
    <location>
        <position position="2723"/>
    </location>
</feature>
<feature type="sequence conflict" description="In Ref. 1; AAB95295." evidence="22" ref="1">
    <original>S</original>
    <variation>P</variation>
    <location>
        <position position="2734"/>
    </location>
</feature>
<feature type="sequence conflict" description="In Ref. 1; AAB95295." evidence="22" ref="1">
    <original>P</original>
    <variation>T</variation>
    <location>
        <position position="2746"/>
    </location>
</feature>
<feature type="sequence conflict" description="In Ref. 1; AAB95295." evidence="22" ref="1">
    <original>S</original>
    <variation>G</variation>
    <location>
        <position position="2763"/>
    </location>
</feature>
<feature type="sequence conflict" description="In Ref. 1; AAB95295." evidence="22" ref="1">
    <original>S</original>
    <variation>T</variation>
    <location>
        <position position="2769"/>
    </location>
</feature>
<feature type="sequence conflict" description="In Ref. 1; AAB95295." evidence="22" ref="1">
    <original>H</original>
    <variation>P</variation>
    <location>
        <position position="2794"/>
    </location>
</feature>
<feature type="sequence conflict" description="In Ref. 1; AAB95295." evidence="22" ref="1">
    <original>APTPTA</original>
    <variation>TPTTTP</variation>
    <location>
        <begin position="2812"/>
        <end position="2817"/>
    </location>
</feature>
<feature type="sequence conflict" description="In Ref. 1; AAB95295." evidence="22" ref="1">
    <location>
        <begin position="2848"/>
        <end position="2870"/>
    </location>
</feature>
<feature type="sequence conflict" description="In Ref. 1; AAB95295." evidence="22" ref="1">
    <original>STTL</original>
    <variation>TPTT</variation>
    <location>
        <begin position="2904"/>
        <end position="2907"/>
    </location>
</feature>
<feature type="sequence conflict" description="In Ref. 1; AAB95295." evidence="22" ref="1">
    <original>I</original>
    <variation>T</variation>
    <location>
        <position position="2919"/>
    </location>
</feature>
<feature type="sequence conflict" description="In Ref. 1; AAB95295." evidence="22" ref="1">
    <original>S</original>
    <variation>T</variation>
    <location>
        <position position="2930"/>
    </location>
</feature>
<feature type="sequence conflict" description="In Ref. 1; AAB95295." evidence="22" ref="1">
    <original>I</original>
    <variation>T</variation>
    <location>
        <position position="2937"/>
    </location>
</feature>
<feature type="sequence conflict" description="In Ref. 1; AAB95295." evidence="22" ref="1">
    <original>PTPIS</original>
    <variation>TTPIT</variation>
    <location>
        <begin position="2953"/>
        <end position="2957"/>
    </location>
</feature>
<feature type="sequence conflict" description="In Ref. 1; AAB95295." evidence="22" ref="1">
    <original>S</original>
    <variation>T</variation>
    <location>
        <position position="3003"/>
    </location>
</feature>
<feature type="sequence conflict" description="In Ref. 1; AAB95295." evidence="22" ref="1">
    <original>S</original>
    <variation>T</variation>
    <location>
        <position position="3022"/>
    </location>
</feature>
<feature type="sequence conflict" description="In Ref. 1; AAB95295." evidence="22" ref="1">
    <original>P</original>
    <variation>T</variation>
    <location>
        <position position="3045"/>
    </location>
</feature>
<feature type="sequence conflict" description="In Ref. 1; AAB95295." evidence="22" ref="1">
    <original>S</original>
    <variation>T</variation>
    <location>
        <position position="3068"/>
    </location>
</feature>
<feature type="sequence conflict" description="In Ref. 1; AAB95295." evidence="22" ref="1">
    <original>P</original>
    <variation>T</variation>
    <location>
        <position position="3091"/>
    </location>
</feature>
<feature type="sequence conflict" description="In Ref. 1; AAB95295." evidence="22" ref="1">
    <original>S</original>
    <variation>T</variation>
    <location>
        <position position="3114"/>
    </location>
</feature>
<feature type="sequence conflict" description="In Ref. 1; AAB95295." evidence="22" ref="1">
    <original>STTL</original>
    <variation>TPTT</variation>
    <location>
        <begin position="3157"/>
        <end position="3160"/>
    </location>
</feature>
<feature type="sequence conflict" description="In Ref. 1; AAB95295." evidence="22" ref="1">
    <original>S</original>
    <variation>T</variation>
    <location>
        <position position="3183"/>
    </location>
</feature>
<feature type="sequence conflict" description="In Ref. 1; AAB95295." evidence="22" ref="1">
    <original>P</original>
    <variation>PTP</variation>
    <location>
        <position position="3194"/>
    </location>
</feature>
<feature type="sequence conflict" description="In Ref. 1; AAB95295." evidence="22" ref="1">
    <original>PTPIS</original>
    <variation>TTPIT</variation>
    <location>
        <begin position="3204"/>
        <end position="3208"/>
    </location>
</feature>
<feature type="sequence conflict" description="In Ref. 1; AAB95295." evidence="22" ref="1">
    <original>M</original>
    <variation>T</variation>
    <location>
        <position position="3227"/>
    </location>
</feature>
<feature type="sequence conflict" description="In Ref. 1; AAB95295." evidence="22" ref="1">
    <original>S</original>
    <variation>T</variation>
    <location>
        <position position="3254"/>
    </location>
</feature>
<feature type="sequence conflict" description="In Ref. 1; AAB95295." evidence="22" ref="1">
    <original>S</original>
    <variation>T</variation>
    <location>
        <position position="3273"/>
    </location>
</feature>
<feature type="sequence conflict" description="In Ref. 1; AAB95295." evidence="22" ref="1">
    <original>STTL</original>
    <variation>TPTT</variation>
    <location>
        <begin position="3316"/>
        <end position="3319"/>
    </location>
</feature>
<feature type="sequence conflict" description="In Ref. 1; AAB95295." evidence="22" ref="1">
    <original>PTPIS</original>
    <variation>TTPIT</variation>
    <location>
        <begin position="3342"/>
        <end position="3346"/>
    </location>
</feature>
<feature type="sequence conflict" description="In Ref. 1; AAB95295." evidence="22" ref="1">
    <original>S</original>
    <variation>T</variation>
    <location>
        <position position="3392"/>
    </location>
</feature>
<feature type="sequence conflict" description="In Ref. 1; AAB95295." evidence="22" ref="1">
    <original>S</original>
    <variation>T</variation>
    <location>
        <position position="3411"/>
    </location>
</feature>
<feature type="sequence conflict" description="In Ref. 1; AAB95295." evidence="22" ref="1">
    <original>APTPTA</original>
    <variation>TPTTTP</variation>
    <location>
        <begin position="3454"/>
        <end position="3459"/>
    </location>
</feature>
<feature type="sequence conflict" description="In Ref. 1; AAB95295." evidence="22" ref="1">
    <original>M</original>
    <variation>T</variation>
    <location>
        <position position="3488"/>
    </location>
</feature>
<feature type="sequence conflict" description="In Ref. 1; AAB95295." evidence="22" ref="1">
    <original>S</original>
    <variation>T</variation>
    <location>
        <position position="3503"/>
    </location>
</feature>
<feature type="sequence conflict" description="In Ref. 1; AAB95295." evidence="22" ref="1">
    <original>PTPIS</original>
    <variation>TTPIT</variation>
    <location>
        <begin position="3526"/>
        <end position="3530"/>
    </location>
</feature>
<feature type="sequence conflict" description="In Ref. 1; AAB95295." evidence="22" ref="1">
    <original>S</original>
    <variation>T</variation>
    <location>
        <position position="3576"/>
    </location>
</feature>
<feature type="sequence conflict" description="In Ref. 1; AAB95295." evidence="22" ref="1">
    <original>S</original>
    <variation>T</variation>
    <location>
        <position position="3595"/>
    </location>
</feature>
<feature type="sequence conflict" description="In Ref. 1; AAB95295." evidence="22" ref="1">
    <original>P</original>
    <variation>T</variation>
    <location>
        <position position="3618"/>
    </location>
</feature>
<feature type="sequence conflict" description="In Ref. 1; AAB95295." evidence="22" ref="1">
    <original>S</original>
    <variation>T</variation>
    <location>
        <position position="3641"/>
    </location>
</feature>
<feature type="sequence conflict" description="In Ref. 1; AAB95295." evidence="22" ref="1">
    <location>
        <begin position="3669"/>
        <end position="3691"/>
    </location>
</feature>
<feature type="sequence conflict" description="In Ref. 1; AAB95295." evidence="22" ref="1">
    <original>S</original>
    <variation>T</variation>
    <location>
        <position position="3710"/>
    </location>
</feature>
<feature type="sequence conflict" description="In Ref. 1; AAB95295." evidence="22" ref="1">
    <original>PTPISTTS</original>
    <variation>TTPITTTT</variation>
    <location>
        <begin position="3733"/>
        <end position="3740"/>
    </location>
</feature>
<feature type="sequence conflict" description="In Ref. 1; AAB95295." evidence="22" ref="1">
    <original>M</original>
    <variation>T</variation>
    <location>
        <position position="3756"/>
    </location>
</feature>
<feature type="sequence conflict" description="In Ref. 1; AAB95295." evidence="22" ref="1">
    <original>S</original>
    <variation>T</variation>
    <location>
        <position position="3779"/>
    </location>
</feature>
<feature type="sequence conflict" description="In Ref. 1; AAB95295." evidence="22" ref="1">
    <original>M</original>
    <variation>T</variation>
    <location>
        <position position="3802"/>
    </location>
</feature>
<feature type="sequence conflict" description="In Ref. 1; AAB95295." evidence="22" ref="1">
    <original>APTPTA</original>
    <variation>TPTTTP</variation>
    <location>
        <begin position="3822"/>
        <end position="3827"/>
    </location>
</feature>
<feature type="sequence conflict" description="In Ref. 1; AAB95295." evidence="22" ref="1">
    <original>STTL</original>
    <variation>TPTT</variation>
    <location>
        <begin position="3868"/>
        <end position="3871"/>
    </location>
</feature>
<feature type="sequence conflict" description="In Ref. 1; AAB95295." evidence="22" ref="1">
    <original>PTPIS</original>
    <variation>TTPIT</variation>
    <location>
        <begin position="3894"/>
        <end position="3898"/>
    </location>
</feature>
<feature type="sequence conflict" description="In Ref. 1; AAB95295." evidence="22" ref="1">
    <original>M</original>
    <variation>T</variation>
    <location>
        <position position="3917"/>
    </location>
</feature>
<feature type="sequence conflict" description="In Ref. 1; AAB95295." evidence="22" ref="1">
    <original>S</original>
    <variation>T</variation>
    <location>
        <position position="3944"/>
    </location>
</feature>
<feature type="sequence conflict" description="In Ref. 1; AAB95295." evidence="22" ref="1">
    <original>S</original>
    <variation>T</variation>
    <location>
        <position position="3990"/>
    </location>
</feature>
<feature type="sequence conflict" description="In Ref. 1; AAB95295." evidence="22" ref="1">
    <original>S</original>
    <variation>T</variation>
    <location>
        <position position="4036"/>
    </location>
</feature>
<feature type="sequence conflict" description="In Ref. 1; AAB95295." evidence="22" ref="1">
    <original>S</original>
    <variation>T</variation>
    <location>
        <position position="4055"/>
    </location>
</feature>
<feature type="sequence conflict" description="In Ref. 1; AAB95295." evidence="22" ref="1">
    <original>APTPTAITTTS</original>
    <variation>TPTTTPITTTT</variation>
    <location>
        <begin position="4098"/>
        <end position="4108"/>
    </location>
</feature>
<feature type="sequence conflict" description="In Ref. 1; AAB95295." evidence="22" ref="1">
    <original>SPTPTA</original>
    <variation>TPTTTP</variation>
    <location>
        <begin position="4144"/>
        <end position="4149"/>
    </location>
</feature>
<feature type="sequence conflict" description="In Ref. 1; AAB95295." evidence="22" ref="1">
    <original>L</original>
    <variation>T</variation>
    <location>
        <position position="4170"/>
    </location>
</feature>
<feature type="sequence conflict" description="In Ref. 1; AAB95295." evidence="22" ref="1">
    <original>PTPIS</original>
    <variation>TTPIT</variation>
    <location>
        <begin position="4193"/>
        <end position="4197"/>
    </location>
</feature>
<feature type="sequence conflict" description="In Ref. 1; AAB95295." evidence="22" ref="1">
    <original>VL</original>
    <variation>TP</variation>
    <location>
        <begin position="4240"/>
        <end position="4241"/>
    </location>
</feature>
<feature type="sequence conflict" description="In Ref. 1; AAB95295." evidence="22" ref="1">
    <original>M</original>
    <variation>V</variation>
    <location>
        <position position="4248"/>
    </location>
</feature>
<feature type="sequence conflict" description="In Ref. 1; AAB95295." evidence="22" ref="1">
    <original>STKSTTV</original>
    <variation>GTQTPTT</variation>
    <location>
        <begin position="4256"/>
        <end position="4262"/>
    </location>
</feature>
<feature type="sequence conflict" description="In Ref. 1; AAB95295." evidence="22" ref="1">
    <original>A</original>
    <variation>P</variation>
    <location>
        <position position="4273"/>
    </location>
</feature>
<feature type="sequence conflict" description="In Ref. 1; AAB95295." evidence="22" ref="1">
    <original>MIPIS</original>
    <variation>TTPIT</variation>
    <location>
        <begin position="4285"/>
        <end position="4289"/>
    </location>
</feature>
<feature type="sequence conflict" description="In Ref. 1; AAB95295." evidence="22" ref="1">
    <original>TGS</original>
    <variation>GTQ</variation>
    <location>
        <begin position="4302"/>
        <end position="4304"/>
    </location>
</feature>
<feature type="strand" evidence="36">
    <location>
        <begin position="36"/>
        <end position="40"/>
    </location>
</feature>
<feature type="turn" evidence="36">
    <location>
        <begin position="41"/>
        <end position="43"/>
    </location>
</feature>
<feature type="strand" evidence="36">
    <location>
        <begin position="44"/>
        <end position="46"/>
    </location>
</feature>
<feature type="strand" evidence="36">
    <location>
        <begin position="52"/>
        <end position="54"/>
    </location>
</feature>
<feature type="strand" evidence="36">
    <location>
        <begin position="59"/>
        <end position="65"/>
    </location>
</feature>
<feature type="strand" evidence="36">
    <location>
        <begin position="68"/>
        <end position="71"/>
    </location>
</feature>
<feature type="strand" evidence="36">
    <location>
        <begin position="74"/>
        <end position="79"/>
    </location>
</feature>
<feature type="strand" evidence="36">
    <location>
        <begin position="93"/>
        <end position="98"/>
    </location>
</feature>
<feature type="strand" evidence="36">
    <location>
        <begin position="101"/>
        <end position="108"/>
    </location>
</feature>
<feature type="strand" evidence="36">
    <location>
        <begin position="110"/>
        <end position="112"/>
    </location>
</feature>
<feature type="strand" evidence="36">
    <location>
        <begin position="119"/>
        <end position="123"/>
    </location>
</feature>
<feature type="strand" evidence="36">
    <location>
        <begin position="126"/>
        <end position="130"/>
    </location>
</feature>
<feature type="strand" evidence="36">
    <location>
        <begin position="135"/>
        <end position="139"/>
    </location>
</feature>
<feature type="turn" evidence="36">
    <location>
        <begin position="140"/>
        <end position="142"/>
    </location>
</feature>
<feature type="strand" evidence="36">
    <location>
        <begin position="143"/>
        <end position="147"/>
    </location>
</feature>
<feature type="strand" evidence="36">
    <location>
        <begin position="149"/>
        <end position="151"/>
    </location>
</feature>
<feature type="strand" evidence="36">
    <location>
        <begin position="153"/>
        <end position="157"/>
    </location>
</feature>
<feature type="helix" evidence="36">
    <location>
        <begin position="159"/>
        <end position="161"/>
    </location>
</feature>
<feature type="turn" evidence="33">
    <location>
        <begin position="162"/>
        <end position="164"/>
    </location>
</feature>
<feature type="helix" evidence="36">
    <location>
        <begin position="177"/>
        <end position="179"/>
    </location>
</feature>
<feature type="helix" evidence="36">
    <location>
        <begin position="183"/>
        <end position="185"/>
    </location>
</feature>
<feature type="helix" evidence="36">
    <location>
        <begin position="190"/>
        <end position="195"/>
    </location>
</feature>
<feature type="helix" evidence="36">
    <location>
        <begin position="222"/>
        <end position="229"/>
    </location>
</feature>
<feature type="helix" evidence="36">
    <location>
        <begin position="232"/>
        <end position="234"/>
    </location>
</feature>
<feature type="turn" evidence="36">
    <location>
        <begin position="235"/>
        <end position="240"/>
    </location>
</feature>
<feature type="helix" evidence="36">
    <location>
        <begin position="243"/>
        <end position="256"/>
    </location>
</feature>
<feature type="strand" evidence="36">
    <location>
        <begin position="259"/>
        <end position="261"/>
    </location>
</feature>
<feature type="helix" evidence="36">
    <location>
        <begin position="262"/>
        <end position="277"/>
    </location>
</feature>
<feature type="strand" evidence="36">
    <location>
        <begin position="288"/>
        <end position="290"/>
    </location>
</feature>
<feature type="strand" evidence="35">
    <location>
        <begin position="296"/>
        <end position="298"/>
    </location>
</feature>
<feature type="strand" evidence="36">
    <location>
        <begin position="300"/>
        <end position="305"/>
    </location>
</feature>
<feature type="strand" evidence="36">
    <location>
        <begin position="311"/>
        <end position="313"/>
    </location>
</feature>
<feature type="helix" evidence="36">
    <location>
        <begin position="319"/>
        <end position="322"/>
    </location>
</feature>
<feature type="strand" evidence="36">
    <location>
        <begin position="326"/>
        <end position="330"/>
    </location>
</feature>
<feature type="turn" evidence="36">
    <location>
        <begin position="339"/>
        <end position="341"/>
    </location>
</feature>
<feature type="helix" evidence="36">
    <location>
        <begin position="348"/>
        <end position="350"/>
    </location>
</feature>
<feature type="strand" evidence="36">
    <location>
        <begin position="353"/>
        <end position="355"/>
    </location>
</feature>
<feature type="strand" evidence="36">
    <location>
        <begin position="358"/>
        <end position="360"/>
    </location>
</feature>
<feature type="strand" evidence="36">
    <location>
        <begin position="365"/>
        <end position="367"/>
    </location>
</feature>
<feature type="strand" evidence="36">
    <location>
        <begin position="369"/>
        <end position="376"/>
    </location>
</feature>
<feature type="strand" evidence="36">
    <location>
        <begin position="379"/>
        <end position="384"/>
    </location>
</feature>
<feature type="strand" evidence="33">
    <location>
        <begin position="389"/>
        <end position="394"/>
    </location>
</feature>
<feature type="turn" evidence="33">
    <location>
        <begin position="395"/>
        <end position="397"/>
    </location>
</feature>
<feature type="strand" evidence="33">
    <location>
        <begin position="398"/>
        <end position="401"/>
    </location>
</feature>
<feature type="strand" evidence="33">
    <location>
        <begin position="404"/>
        <end position="407"/>
    </location>
</feature>
<feature type="strand" evidence="33">
    <location>
        <begin position="413"/>
        <end position="425"/>
    </location>
</feature>
<feature type="strand" evidence="33">
    <location>
        <begin position="427"/>
        <end position="434"/>
    </location>
</feature>
<feature type="strand" evidence="33">
    <location>
        <begin position="436"/>
        <end position="438"/>
    </location>
</feature>
<feature type="strand" evidence="33">
    <location>
        <begin position="442"/>
        <end position="451"/>
    </location>
</feature>
<feature type="turn" evidence="33">
    <location>
        <begin position="452"/>
        <end position="455"/>
    </location>
</feature>
<feature type="strand" evidence="33">
    <location>
        <begin position="456"/>
        <end position="461"/>
    </location>
</feature>
<feature type="strand" evidence="33">
    <location>
        <begin position="466"/>
        <end position="472"/>
    </location>
</feature>
<feature type="strand" evidence="35">
    <location>
        <begin position="475"/>
        <end position="478"/>
    </location>
</feature>
<feature type="strand" evidence="33">
    <location>
        <begin position="480"/>
        <end position="485"/>
    </location>
</feature>
<feature type="strand" evidence="33">
    <location>
        <begin position="487"/>
        <end position="505"/>
    </location>
</feature>
<feature type="strand" evidence="33">
    <location>
        <begin position="507"/>
        <end position="509"/>
    </location>
</feature>
<feature type="strand" evidence="33">
    <location>
        <begin position="511"/>
        <end position="516"/>
    </location>
</feature>
<feature type="helix" evidence="33">
    <location>
        <begin position="518"/>
        <end position="520"/>
    </location>
</feature>
<feature type="strand" evidence="33">
    <location>
        <begin position="524"/>
        <end position="526"/>
    </location>
</feature>
<feature type="turn" evidence="33">
    <location>
        <begin position="536"/>
        <end position="539"/>
    </location>
</feature>
<feature type="strand" evidence="35">
    <location>
        <begin position="544"/>
        <end position="546"/>
    </location>
</feature>
<feature type="helix" evidence="33">
    <location>
        <begin position="550"/>
        <end position="553"/>
    </location>
</feature>
<feature type="helix" evidence="33">
    <location>
        <begin position="554"/>
        <end position="556"/>
    </location>
</feature>
<feature type="strand" evidence="33">
    <location>
        <begin position="557"/>
        <end position="560"/>
    </location>
</feature>
<feature type="helix" evidence="33">
    <location>
        <begin position="573"/>
        <end position="576"/>
    </location>
</feature>
<feature type="helix" evidence="33">
    <location>
        <begin position="580"/>
        <end position="588"/>
    </location>
</feature>
<feature type="helix" evidence="33">
    <location>
        <begin position="589"/>
        <end position="591"/>
    </location>
</feature>
<feature type="strand" evidence="33">
    <location>
        <begin position="594"/>
        <end position="596"/>
    </location>
</feature>
<feature type="helix" evidence="33">
    <location>
        <begin position="599"/>
        <end position="601"/>
    </location>
</feature>
<feature type="turn" evidence="33">
    <location>
        <begin position="602"/>
        <end position="604"/>
    </location>
</feature>
<feature type="turn" evidence="33">
    <location>
        <begin position="607"/>
        <end position="609"/>
    </location>
</feature>
<feature type="helix" evidence="33">
    <location>
        <begin position="610"/>
        <end position="620"/>
    </location>
</feature>
<feature type="strand" evidence="33">
    <location>
        <begin position="621"/>
        <end position="623"/>
    </location>
</feature>
<feature type="helix" evidence="33">
    <location>
        <begin position="624"/>
        <end position="635"/>
    </location>
</feature>
<feature type="helix" evidence="33">
    <location>
        <begin position="637"/>
        <end position="640"/>
    </location>
</feature>
<feature type="turn" evidence="33">
    <location>
        <begin position="641"/>
        <end position="643"/>
    </location>
</feature>
<feature type="strand" evidence="33">
    <location>
        <begin position="651"/>
        <end position="654"/>
    </location>
</feature>
<feature type="strand" evidence="33">
    <location>
        <begin position="656"/>
        <end position="658"/>
    </location>
</feature>
<feature type="strand" evidence="35">
    <location>
        <begin position="666"/>
        <end position="671"/>
    </location>
</feature>
<feature type="helix" evidence="33">
    <location>
        <begin position="678"/>
        <end position="683"/>
    </location>
</feature>
<feature type="strand" evidence="33">
    <location>
        <begin position="684"/>
        <end position="687"/>
    </location>
</feature>
<feature type="strand" evidence="35">
    <location>
        <begin position="695"/>
        <end position="699"/>
    </location>
</feature>
<feature type="strand" evidence="33">
    <location>
        <begin position="702"/>
        <end position="704"/>
    </location>
</feature>
<feature type="strand" evidence="33">
    <location>
        <begin position="708"/>
        <end position="711"/>
    </location>
</feature>
<feature type="helix" evidence="35">
    <location>
        <begin position="715"/>
        <end position="717"/>
    </location>
</feature>
<feature type="strand" evidence="33">
    <location>
        <begin position="744"/>
        <end position="747"/>
    </location>
</feature>
<feature type="strand" evidence="33">
    <location>
        <begin position="784"/>
        <end position="786"/>
    </location>
</feature>
<feature type="turn" evidence="33">
    <location>
        <begin position="787"/>
        <end position="789"/>
    </location>
</feature>
<feature type="strand" evidence="33">
    <location>
        <begin position="810"/>
        <end position="813"/>
    </location>
</feature>
<feature type="strand" evidence="33">
    <location>
        <begin position="822"/>
        <end position="824"/>
    </location>
</feature>
<feature type="strand" evidence="33">
    <location>
        <begin position="827"/>
        <end position="829"/>
    </location>
</feature>
<feature type="strand" evidence="33">
    <location>
        <begin position="834"/>
        <end position="837"/>
    </location>
</feature>
<feature type="strand" evidence="33">
    <location>
        <begin position="840"/>
        <end position="844"/>
    </location>
</feature>
<feature type="strand" evidence="33">
    <location>
        <begin position="846"/>
        <end position="849"/>
    </location>
</feature>
<feature type="strand" evidence="32">
    <location>
        <begin position="858"/>
        <end position="863"/>
    </location>
</feature>
<feature type="turn" evidence="32">
    <location>
        <begin position="864"/>
        <end position="866"/>
    </location>
</feature>
<feature type="strand" evidence="32">
    <location>
        <begin position="867"/>
        <end position="869"/>
    </location>
</feature>
<feature type="strand" evidence="32">
    <location>
        <begin position="875"/>
        <end position="877"/>
    </location>
</feature>
<feature type="strand" evidence="32">
    <location>
        <begin position="881"/>
        <end position="889"/>
    </location>
</feature>
<feature type="strand" evidence="32">
    <location>
        <begin position="899"/>
        <end position="908"/>
    </location>
</feature>
<feature type="strand" evidence="32">
    <location>
        <begin position="910"/>
        <end position="913"/>
    </location>
</feature>
<feature type="strand" evidence="32">
    <location>
        <begin position="915"/>
        <end position="924"/>
    </location>
</feature>
<feature type="strand" evidence="32">
    <location>
        <begin position="927"/>
        <end position="932"/>
    </location>
</feature>
<feature type="strand" evidence="32">
    <location>
        <begin position="935"/>
        <end position="940"/>
    </location>
</feature>
<feature type="strand" evidence="32">
    <location>
        <begin position="943"/>
        <end position="945"/>
    </location>
</feature>
<feature type="strand" evidence="32">
    <location>
        <begin position="949"/>
        <end position="954"/>
    </location>
</feature>
<feature type="strand" evidence="32">
    <location>
        <begin position="957"/>
        <end position="962"/>
    </location>
</feature>
<feature type="strand" evidence="32">
    <location>
        <begin position="965"/>
        <end position="970"/>
    </location>
</feature>
<feature type="strand" evidence="32">
    <location>
        <begin position="972"/>
        <end position="974"/>
    </location>
</feature>
<feature type="strand" evidence="32">
    <location>
        <begin position="976"/>
        <end position="980"/>
    </location>
</feature>
<feature type="helix" evidence="32">
    <location>
        <begin position="982"/>
        <end position="984"/>
    </location>
</feature>
<feature type="helix" evidence="33">
    <location>
        <begin position="999"/>
        <end position="1001"/>
    </location>
</feature>
<feature type="helix" evidence="32">
    <location>
        <begin position="1014"/>
        <end position="1020"/>
    </location>
</feature>
<feature type="strand" evidence="32">
    <location>
        <begin position="1022"/>
        <end position="1024"/>
    </location>
</feature>
<feature type="helix" evidence="32">
    <location>
        <begin position="1036"/>
        <end position="1039"/>
    </location>
</feature>
<feature type="helix" evidence="32">
    <location>
        <begin position="1041"/>
        <end position="1043"/>
    </location>
</feature>
<feature type="helix" evidence="32">
    <location>
        <begin position="1044"/>
        <end position="1051"/>
    </location>
</feature>
<feature type="helix" evidence="32">
    <location>
        <begin position="1052"/>
        <end position="1055"/>
    </location>
</feature>
<feature type="helix" evidence="32">
    <location>
        <begin position="1057"/>
        <end position="1059"/>
    </location>
</feature>
<feature type="helix" evidence="32">
    <location>
        <begin position="1062"/>
        <end position="1065"/>
    </location>
</feature>
<feature type="helix" evidence="32">
    <location>
        <begin position="1069"/>
        <end position="1081"/>
    </location>
</feature>
<feature type="helix" evidence="32">
    <location>
        <begin position="1087"/>
        <end position="1105"/>
    </location>
</feature>
<feature type="strand" evidence="32">
    <location>
        <begin position="1114"/>
        <end position="1117"/>
    </location>
</feature>
<feature type="helix" evidence="32">
    <location>
        <begin position="1121"/>
        <end position="1124"/>
    </location>
</feature>
<feature type="strand" evidence="32">
    <location>
        <begin position="1133"/>
        <end position="1135"/>
    </location>
</feature>
<feature type="helix" evidence="32">
    <location>
        <begin position="1145"/>
        <end position="1149"/>
    </location>
</feature>
<feature type="strand" evidence="32">
    <location>
        <begin position="1162"/>
        <end position="1164"/>
    </location>
</feature>
<feature type="strand" evidence="35">
    <location>
        <begin position="1169"/>
        <end position="1171"/>
    </location>
</feature>
<feature type="strand" evidence="32">
    <location>
        <begin position="1173"/>
        <end position="1175"/>
    </location>
</feature>
<feature type="turn" evidence="32">
    <location>
        <begin position="1176"/>
        <end position="1179"/>
    </location>
</feature>
<feature type="strand" evidence="32">
    <location>
        <begin position="1180"/>
        <end position="1182"/>
    </location>
</feature>
<feature type="helix" evidence="32">
    <location>
        <begin position="1184"/>
        <end position="1186"/>
    </location>
</feature>
<feature type="strand" evidence="32">
    <location>
        <begin position="1189"/>
        <end position="1193"/>
    </location>
</feature>
<feature type="strand" evidence="35">
    <location>
        <begin position="1198"/>
        <end position="1202"/>
    </location>
</feature>
<feature type="strand" evidence="32">
    <location>
        <begin position="1205"/>
        <end position="1213"/>
    </location>
</feature>
<feature type="strand" evidence="32">
    <location>
        <begin position="1219"/>
        <end position="1223"/>
    </location>
</feature>
<feature type="strand" evidence="40">
    <location>
        <begin position="1301"/>
        <end position="1305"/>
    </location>
</feature>
<feature type="strand" evidence="40">
    <location>
        <begin position="1316"/>
        <end position="1324"/>
    </location>
</feature>
<feature type="turn" evidence="40">
    <location>
        <begin position="1327"/>
        <end position="1329"/>
    </location>
</feature>
<feature type="strand" evidence="40">
    <location>
        <begin position="1334"/>
        <end position="1342"/>
    </location>
</feature>
<feature type="helix" evidence="40">
    <location>
        <begin position="1348"/>
        <end position="1350"/>
    </location>
</feature>
<feature type="strand" evidence="40">
    <location>
        <begin position="1356"/>
        <end position="1358"/>
    </location>
</feature>
<feature type="turn" evidence="40">
    <location>
        <begin position="1359"/>
        <end position="1361"/>
    </location>
</feature>
<feature type="strand" evidence="40">
    <location>
        <begin position="1362"/>
        <end position="1366"/>
    </location>
</feature>
<feature type="helix" evidence="40">
    <location>
        <begin position="1367"/>
        <end position="1369"/>
    </location>
</feature>
<feature type="turn" evidence="33">
    <location>
        <begin position="1371"/>
        <end position="1373"/>
    </location>
</feature>
<feature type="strand" evidence="33">
    <location>
        <begin position="1374"/>
        <end position="1376"/>
    </location>
</feature>
<feature type="strand" evidence="40">
    <location>
        <begin position="1382"/>
        <end position="1391"/>
    </location>
</feature>
<feature type="helix" evidence="34">
    <location>
        <begin position="1392"/>
        <end position="1394"/>
    </location>
</feature>
<feature type="strand" evidence="41">
    <location>
        <begin position="1785"/>
        <end position="1788"/>
    </location>
</feature>
<feature type="strand" evidence="41">
    <location>
        <begin position="1805"/>
        <end position="1808"/>
    </location>
</feature>
<feature type="turn" evidence="41">
    <location>
        <begin position="1810"/>
        <end position="1812"/>
    </location>
</feature>
<feature type="strand" evidence="41">
    <location>
        <begin position="1821"/>
        <end position="1825"/>
    </location>
</feature>
<feature type="strand" evidence="41">
    <location>
        <begin position="1828"/>
        <end position="1831"/>
    </location>
</feature>
<feature type="helix" evidence="41">
    <location>
        <begin position="1833"/>
        <end position="1836"/>
    </location>
</feature>
<feature type="strand" evidence="41">
    <location>
        <begin position="1840"/>
        <end position="1843"/>
    </location>
</feature>
<feature type="turn" evidence="41">
    <location>
        <begin position="1844"/>
        <end position="1846"/>
    </location>
</feature>
<feature type="strand" evidence="41">
    <location>
        <begin position="1847"/>
        <end position="1850"/>
    </location>
</feature>
<feature type="strand" evidence="41">
    <location>
        <begin position="1860"/>
        <end position="1863"/>
    </location>
</feature>
<feature type="strand" evidence="41">
    <location>
        <begin position="1869"/>
        <end position="1877"/>
    </location>
</feature>
<feature type="turn" evidence="39">
    <location>
        <begin position="4538"/>
        <end position="4540"/>
    </location>
</feature>
<feature type="strand" evidence="39">
    <location>
        <begin position="4545"/>
        <end position="4551"/>
    </location>
</feature>
<feature type="strand" evidence="37">
    <location>
        <begin position="4567"/>
        <end position="4570"/>
    </location>
</feature>
<feature type="strand" evidence="39">
    <location>
        <begin position="4573"/>
        <end position="4576"/>
    </location>
</feature>
<feature type="strand" evidence="39">
    <location>
        <begin position="4578"/>
        <end position="4581"/>
    </location>
</feature>
<feature type="strand" evidence="39">
    <location>
        <begin position="4583"/>
        <end position="4586"/>
    </location>
</feature>
<feature type="strand" evidence="39">
    <location>
        <begin position="4589"/>
        <end position="4594"/>
    </location>
</feature>
<feature type="turn" evidence="39">
    <location>
        <begin position="4595"/>
        <end position="4597"/>
    </location>
</feature>
<feature type="strand" evidence="39">
    <location>
        <begin position="4598"/>
        <end position="4600"/>
    </location>
</feature>
<feature type="strand" evidence="38">
    <location>
        <begin position="4602"/>
        <end position="4604"/>
    </location>
</feature>
<feature type="strand" evidence="39">
    <location>
        <begin position="4606"/>
        <end position="4608"/>
    </location>
</feature>
<feature type="strand" evidence="39">
    <location>
        <begin position="4615"/>
        <end position="4622"/>
    </location>
</feature>
<feature type="strand" evidence="39">
    <location>
        <begin position="4629"/>
        <end position="4637"/>
    </location>
</feature>
<feature type="strand" evidence="37">
    <location>
        <begin position="4639"/>
        <end position="4641"/>
    </location>
</feature>
<feature type="strand" evidence="39">
    <location>
        <begin position="4647"/>
        <end position="4653"/>
    </location>
</feature>
<feature type="strand" evidence="39">
    <location>
        <begin position="4656"/>
        <end position="4663"/>
    </location>
</feature>
<feature type="strand" evidence="39">
    <location>
        <begin position="4666"/>
        <end position="4671"/>
    </location>
</feature>
<feature type="strand" evidence="39">
    <location>
        <begin position="4681"/>
        <end position="4685"/>
    </location>
</feature>
<feature type="strand" evidence="39">
    <location>
        <begin position="4688"/>
        <end position="4693"/>
    </location>
</feature>
<feature type="strand" evidence="39">
    <location>
        <begin position="4696"/>
        <end position="4701"/>
    </location>
</feature>
<feature type="turn" evidence="39">
    <location>
        <begin position="4702"/>
        <end position="4705"/>
    </location>
</feature>
<feature type="strand" evidence="39">
    <location>
        <begin position="4706"/>
        <end position="4711"/>
    </location>
</feature>
<feature type="strand" evidence="39">
    <location>
        <begin position="4714"/>
        <end position="4719"/>
    </location>
</feature>
<feature type="turn" evidence="39">
    <location>
        <begin position="4721"/>
        <end position="4724"/>
    </location>
</feature>
<feature type="strand" evidence="39">
    <location>
        <begin position="4728"/>
        <end position="4730"/>
    </location>
</feature>
<feature type="helix" evidence="39">
    <location>
        <begin position="4740"/>
        <end position="4742"/>
    </location>
</feature>
<feature type="strand" evidence="39">
    <location>
        <begin position="4746"/>
        <end position="4748"/>
    </location>
</feature>
<feature type="helix" evidence="39">
    <location>
        <begin position="4754"/>
        <end position="4760"/>
    </location>
</feature>
<feature type="strand" evidence="39">
    <location>
        <begin position="4766"/>
        <end position="4768"/>
    </location>
</feature>
<feature type="helix" evidence="39">
    <location>
        <begin position="4801"/>
        <end position="4804"/>
    </location>
</feature>
<feature type="turn" evidence="39">
    <location>
        <begin position="4805"/>
        <end position="4807"/>
    </location>
</feature>
<feature type="helix" evidence="39">
    <location>
        <begin position="4809"/>
        <end position="4811"/>
    </location>
</feature>
<feature type="helix" evidence="39">
    <location>
        <begin position="4812"/>
        <end position="4815"/>
    </location>
</feature>
<feature type="helix" evidence="39">
    <location>
        <begin position="4821"/>
        <end position="4833"/>
    </location>
</feature>
<feature type="strand" evidence="39">
    <location>
        <begin position="4834"/>
        <end position="4837"/>
    </location>
</feature>
<feature type="helix" evidence="39">
    <location>
        <begin position="4841"/>
        <end position="4853"/>
    </location>
</feature>
<feature type="helix" evidence="39">
    <location>
        <begin position="4862"/>
        <end position="4864"/>
    </location>
</feature>
<feature type="strand" evidence="37">
    <location>
        <begin position="4866"/>
        <end position="4868"/>
    </location>
</feature>
<feature type="strand" evidence="39">
    <location>
        <begin position="4880"/>
        <end position="4882"/>
    </location>
</feature>
<feature type="helix" evidence="38">
    <location>
        <begin position="4893"/>
        <end position="4895"/>
    </location>
</feature>
<feature type="strand" evidence="37">
    <location>
        <begin position="4902"/>
        <end position="4906"/>
    </location>
</feature>
<feature type="strand" evidence="39">
    <location>
        <begin position="4909"/>
        <end position="4913"/>
    </location>
</feature>
<feature type="strand" evidence="39">
    <location>
        <begin position="4921"/>
        <end position="4924"/>
    </location>
</feature>
<feature type="strand" evidence="39">
    <location>
        <begin position="4930"/>
        <end position="4932"/>
    </location>
</feature>
<feature type="strand" evidence="39">
    <location>
        <begin position="4939"/>
        <end position="4943"/>
    </location>
</feature>
<feature type="strand" evidence="39">
    <location>
        <begin position="4946"/>
        <end position="4950"/>
    </location>
</feature>
<feature type="strand" evidence="39">
    <location>
        <begin position="4952"/>
        <end position="4961"/>
    </location>
</feature>
<feature type="strand" evidence="37">
    <location>
        <begin position="4987"/>
        <end position="4989"/>
    </location>
</feature>
<feature type="strand" evidence="37">
    <location>
        <begin position="5021"/>
        <end position="5025"/>
    </location>
</feature>
<feature type="turn" evidence="37">
    <location>
        <begin position="5040"/>
        <end position="5043"/>
    </location>
</feature>
<feature type="strand" evidence="37">
    <location>
        <begin position="5051"/>
        <end position="5054"/>
    </location>
</feature>
<feature type="turn" evidence="37">
    <location>
        <begin position="5064"/>
        <end position="5066"/>
    </location>
</feature>
<feature type="helix" evidence="37">
    <location>
        <begin position="5067"/>
        <end position="5070"/>
    </location>
</feature>
<dbReference type="EMBL" id="L21998">
    <property type="protein sequence ID" value="AAB95295.1"/>
    <property type="molecule type" value="mRNA"/>
</dbReference>
<dbReference type="EMBL" id="AC139749">
    <property type="status" value="NOT_ANNOTATED_CDS"/>
    <property type="molecule type" value="Genomic_DNA"/>
</dbReference>
<dbReference type="EMBL" id="AC239832">
    <property type="status" value="NOT_ANNOTATED_CDS"/>
    <property type="molecule type" value="Genomic_DNA"/>
</dbReference>
<dbReference type="EMBL" id="AC256300">
    <property type="status" value="NOT_ANNOTATED_CDS"/>
    <property type="molecule type" value="Genomic_DNA"/>
</dbReference>
<dbReference type="EMBL" id="M74027">
    <property type="protein sequence ID" value="AAA59875.1"/>
    <property type="molecule type" value="Genomic_DNA"/>
</dbReference>
<dbReference type="EMBL" id="M94131">
    <property type="protein sequence ID" value="AAA59163.1"/>
    <property type="molecule type" value="mRNA"/>
</dbReference>
<dbReference type="EMBL" id="M94132">
    <property type="protein sequence ID" value="AAA59164.1"/>
    <property type="molecule type" value="mRNA"/>
</dbReference>
<dbReference type="PIR" id="A49963">
    <property type="entry name" value="A43932"/>
</dbReference>
<dbReference type="RefSeq" id="NP_002448.4">
    <property type="nucleotide sequence ID" value="NM_002457.4"/>
</dbReference>
<dbReference type="PDB" id="6RBF">
    <property type="method" value="X-ray"/>
    <property type="resolution" value="2.70 A"/>
    <property type="chains" value="A/B/C/D=858-1259"/>
</dbReference>
<dbReference type="PDB" id="6TM2">
    <property type="method" value="EM"/>
    <property type="resolution" value="2.95 A"/>
    <property type="chains" value="A/B=21-749, C/D=750-1197, E/F=1198-1397"/>
</dbReference>
<dbReference type="PDB" id="6TM6">
    <property type="method" value="X-ray"/>
    <property type="resolution" value="1.63 A"/>
    <property type="chains" value="A=1301-1395"/>
</dbReference>
<dbReference type="PDB" id="7A5O">
    <property type="method" value="EM"/>
    <property type="resolution" value="2.95 A"/>
    <property type="chains" value="A/B/C/D/E/F/G/H/I/J=21-1397"/>
</dbReference>
<dbReference type="PDB" id="7POV">
    <property type="method" value="EM"/>
    <property type="resolution" value="3.80 A"/>
    <property type="chains" value="A/B/C/D=21-1259"/>
</dbReference>
<dbReference type="PDB" id="7PP6">
    <property type="method" value="EM"/>
    <property type="resolution" value="3.40 A"/>
    <property type="chains" value="A/B/C/D/E/G=21-1259"/>
</dbReference>
<dbReference type="PDB" id="7PRL">
    <property type="method" value="X-ray"/>
    <property type="resolution" value="2.48 A"/>
    <property type="chains" value="A=1-389"/>
</dbReference>
<dbReference type="PDB" id="7QCL">
    <property type="method" value="EM"/>
    <property type="resolution" value="3.36 A"/>
    <property type="chains" value="A/B=4408-4990"/>
</dbReference>
<dbReference type="PDB" id="7QCN">
    <property type="method" value="EM"/>
    <property type="resolution" value="3.40 A"/>
    <property type="chains" value="A/B=4409-4851"/>
</dbReference>
<dbReference type="PDB" id="7QCU">
    <property type="method" value="EM"/>
    <property type="resolution" value="3.25 A"/>
    <property type="chains" value="A/B=4406-5179"/>
</dbReference>
<dbReference type="PDB" id="8CK2">
    <property type="method" value="X-ray"/>
    <property type="resolution" value="1.50 A"/>
    <property type="chains" value="A=1301-1395"/>
</dbReference>
<dbReference type="PDB" id="8S03">
    <property type="method" value="NMR"/>
    <property type="chains" value="A=1781-1892"/>
</dbReference>
<dbReference type="PDBsum" id="6RBF"/>
<dbReference type="PDBsum" id="6TM2"/>
<dbReference type="PDBsum" id="6TM6"/>
<dbReference type="PDBsum" id="7A5O"/>
<dbReference type="PDBsum" id="7POV"/>
<dbReference type="PDBsum" id="7PP6"/>
<dbReference type="PDBsum" id="7PRL"/>
<dbReference type="PDBsum" id="7QCL"/>
<dbReference type="PDBsum" id="7QCN"/>
<dbReference type="PDBsum" id="7QCU"/>
<dbReference type="PDBsum" id="8CK2"/>
<dbReference type="PDBsum" id="8S03"/>
<dbReference type="EMDB" id="EMD-10517"/>
<dbReference type="EMDB" id="EMD-11658"/>
<dbReference type="EMDB" id="EMD-13896"/>
<dbReference type="EMDB" id="EMD-13897"/>
<dbReference type="EMDB" id="EMD-13899"/>
<dbReference type="SASBDB" id="Q02817"/>
<dbReference type="SMR" id="Q02817"/>
<dbReference type="BioGRID" id="110670">
    <property type="interactions" value="4"/>
</dbReference>
<dbReference type="DIP" id="DIP-48824N"/>
<dbReference type="FunCoup" id="Q02817">
    <property type="interactions" value="74"/>
</dbReference>
<dbReference type="IntAct" id="Q02817">
    <property type="interactions" value="5"/>
</dbReference>
<dbReference type="MINT" id="Q02817"/>
<dbReference type="STRING" id="9606.ENSP00000494061"/>
<dbReference type="DrugBank" id="DB02587">
    <property type="generic name" value="Colforsin"/>
</dbReference>
<dbReference type="DrugBank" id="DB01411">
    <property type="generic name" value="Pranlukast"/>
</dbReference>
<dbReference type="MEROPS" id="I08.951"/>
<dbReference type="MEROPS" id="I08.954"/>
<dbReference type="GlyConnect" id="1519">
    <property type="glycosylation" value="2 N-Linked glycans (3 sites), 27 O-Linked glycans"/>
</dbReference>
<dbReference type="GlyConnect" id="373">
    <property type="glycosylation" value="8 O-Linked glycans"/>
</dbReference>
<dbReference type="GlyCosmos" id="Q02817">
    <property type="glycosylation" value="30 sites, 53 glycans"/>
</dbReference>
<dbReference type="GlyGen" id="Q02817">
    <property type="glycosylation" value="292 sites, 51 O-linked glycans (1 site)"/>
</dbReference>
<dbReference type="iPTMnet" id="Q02817"/>
<dbReference type="PhosphoSitePlus" id="Q02817"/>
<dbReference type="SwissPalm" id="Q02817"/>
<dbReference type="BioMuta" id="MUC2"/>
<dbReference type="DMDM" id="2506877"/>
<dbReference type="CPTAC" id="CPTAC-1497"/>
<dbReference type="jPOST" id="Q02817"/>
<dbReference type="MassIVE" id="Q02817"/>
<dbReference type="ProteomicsDB" id="58127"/>
<dbReference type="GeneID" id="4583"/>
<dbReference type="KEGG" id="hsa:4583"/>
<dbReference type="AGR" id="HGNC:7512"/>
<dbReference type="CTD" id="4583"/>
<dbReference type="GeneCards" id="MUC2"/>
<dbReference type="HGNC" id="HGNC:7512">
    <property type="gene designation" value="MUC2"/>
</dbReference>
<dbReference type="MIM" id="158370">
    <property type="type" value="gene"/>
</dbReference>
<dbReference type="neXtProt" id="NX_Q02817"/>
<dbReference type="PharmGKB" id="PA31316"/>
<dbReference type="InParanoid" id="Q02817"/>
<dbReference type="OrthoDB" id="9539152at2759"/>
<dbReference type="PAN-GO" id="Q02817">
    <property type="GO annotations" value="2 GO annotations based on evolutionary models"/>
</dbReference>
<dbReference type="PathwayCommons" id="Q02817"/>
<dbReference type="Reactome" id="R-HSA-5083625">
    <property type="pathway name" value="Defective GALNT3 causes HFTC"/>
</dbReference>
<dbReference type="Reactome" id="R-HSA-5083632">
    <property type="pathway name" value="Defective C1GALT1C1 causes TNPS"/>
</dbReference>
<dbReference type="Reactome" id="R-HSA-5083636">
    <property type="pathway name" value="Defective GALNT12 causes CRCS1"/>
</dbReference>
<dbReference type="Reactome" id="R-HSA-5621480">
    <property type="pathway name" value="Dectin-2 family"/>
</dbReference>
<dbReference type="Reactome" id="R-HSA-913709">
    <property type="pathway name" value="O-linked glycosylation of mucins"/>
</dbReference>
<dbReference type="Reactome" id="R-HSA-977068">
    <property type="pathway name" value="Termination of O-glycan biosynthesis"/>
</dbReference>
<dbReference type="SignaLink" id="Q02817"/>
<dbReference type="SIGNOR" id="Q02817"/>
<dbReference type="ChiTaRS" id="MUC2">
    <property type="organism name" value="human"/>
</dbReference>
<dbReference type="GeneWiki" id="MUC2"/>
<dbReference type="Pharos" id="Q02817">
    <property type="development level" value="Tdark"/>
</dbReference>
<dbReference type="PRO" id="PR:Q02817"/>
<dbReference type="Proteomes" id="UP000005640">
    <property type="component" value="Unplaced"/>
</dbReference>
<dbReference type="RNAct" id="Q02817">
    <property type="molecule type" value="protein"/>
</dbReference>
<dbReference type="GO" id="GO:0062023">
    <property type="term" value="C:collagen-containing extracellular matrix"/>
    <property type="evidence" value="ECO:0007005"/>
    <property type="project" value="BHF-UCL"/>
</dbReference>
<dbReference type="GO" id="GO:0005796">
    <property type="term" value="C:Golgi lumen"/>
    <property type="evidence" value="ECO:0000304"/>
    <property type="project" value="Reactome"/>
</dbReference>
<dbReference type="GO" id="GO:0070702">
    <property type="term" value="C:inner mucus layer"/>
    <property type="evidence" value="ECO:0000250"/>
    <property type="project" value="UniProtKB"/>
</dbReference>
<dbReference type="GO" id="GO:0070703">
    <property type="term" value="C:outer mucus layer"/>
    <property type="evidence" value="ECO:0000250"/>
    <property type="project" value="UniProtKB"/>
</dbReference>
<dbReference type="GO" id="GO:0005886">
    <property type="term" value="C:plasma membrane"/>
    <property type="evidence" value="ECO:0000304"/>
    <property type="project" value="Reactome"/>
</dbReference>
<dbReference type="GO" id="GO:1903135">
    <property type="term" value="F:cupric ion binding"/>
    <property type="evidence" value="ECO:0000314"/>
    <property type="project" value="UniProtKB"/>
</dbReference>
<dbReference type="GO" id="GO:1903136">
    <property type="term" value="F:cuprous ion binding"/>
    <property type="evidence" value="ECO:0000314"/>
    <property type="project" value="UniProtKB"/>
</dbReference>
<dbReference type="GO" id="GO:0010273">
    <property type="term" value="P:detoxification of copper ion"/>
    <property type="evidence" value="ECO:0000314"/>
    <property type="project" value="UniProtKB"/>
</dbReference>
<dbReference type="GO" id="GO:0048874">
    <property type="term" value="P:host-mediated regulation of intestinal microbiota composition"/>
    <property type="evidence" value="ECO:0000250"/>
    <property type="project" value="UniProtKB"/>
</dbReference>
<dbReference type="GO" id="GO:0030277">
    <property type="term" value="P:maintenance of gastrointestinal epithelium"/>
    <property type="evidence" value="ECO:0000315"/>
    <property type="project" value="UniProtKB"/>
</dbReference>
<dbReference type="GO" id="GO:0070254">
    <property type="term" value="P:mucus secretion"/>
    <property type="evidence" value="ECO:0000315"/>
    <property type="project" value="UniProt"/>
</dbReference>
<dbReference type="CDD" id="cd19941">
    <property type="entry name" value="TIL"/>
    <property type="match status" value="3"/>
</dbReference>
<dbReference type="FunFam" id="2.10.25.10:FF:000153">
    <property type="entry name" value="MUC5B isoform 1"/>
    <property type="match status" value="1"/>
</dbReference>
<dbReference type="FunFam" id="2.10.25.10:FF:000674">
    <property type="entry name" value="Mucin-2"/>
    <property type="match status" value="1"/>
</dbReference>
<dbReference type="Gene3D" id="2.10.25.10">
    <property type="entry name" value="Laminin"/>
    <property type="match status" value="3"/>
</dbReference>
<dbReference type="InterPro" id="IPR006207">
    <property type="entry name" value="Cys_knot_C"/>
</dbReference>
<dbReference type="InterPro" id="IPR050780">
    <property type="entry name" value="Mucin_vWF_Thrombospondin_sf"/>
</dbReference>
<dbReference type="InterPro" id="IPR036084">
    <property type="entry name" value="Ser_inhib-like_sf"/>
</dbReference>
<dbReference type="InterPro" id="IPR002919">
    <property type="entry name" value="TIL_dom"/>
</dbReference>
<dbReference type="InterPro" id="IPR014853">
    <property type="entry name" value="VWF/SSPO/ZAN-like_Cys-rich_dom"/>
</dbReference>
<dbReference type="InterPro" id="IPR001007">
    <property type="entry name" value="VWF_dom"/>
</dbReference>
<dbReference type="InterPro" id="IPR001846">
    <property type="entry name" value="VWF_type-D"/>
</dbReference>
<dbReference type="InterPro" id="IPR025155">
    <property type="entry name" value="WxxW_domain"/>
</dbReference>
<dbReference type="PANTHER" id="PTHR11339">
    <property type="entry name" value="EXTRACELLULAR MATRIX GLYCOPROTEIN RELATED"/>
    <property type="match status" value="1"/>
</dbReference>
<dbReference type="PANTHER" id="PTHR11339:SF384">
    <property type="entry name" value="MUCIN-2"/>
    <property type="match status" value="1"/>
</dbReference>
<dbReference type="Pfam" id="PF08742">
    <property type="entry name" value="C8"/>
    <property type="match status" value="4"/>
</dbReference>
<dbReference type="Pfam" id="PF13330">
    <property type="entry name" value="Mucin2_WxxW"/>
    <property type="match status" value="2"/>
</dbReference>
<dbReference type="Pfam" id="PF01826">
    <property type="entry name" value="TIL"/>
    <property type="match status" value="1"/>
</dbReference>
<dbReference type="Pfam" id="PF00094">
    <property type="entry name" value="VWD"/>
    <property type="match status" value="4"/>
</dbReference>
<dbReference type="Pfam" id="PF23244">
    <property type="entry name" value="VWF"/>
    <property type="match status" value="2"/>
</dbReference>
<dbReference type="PRINTS" id="PR01217">
    <property type="entry name" value="PRICHEXTENSN"/>
</dbReference>
<dbReference type="SMART" id="SM00832">
    <property type="entry name" value="C8"/>
    <property type="match status" value="4"/>
</dbReference>
<dbReference type="SMART" id="SM00041">
    <property type="entry name" value="CT"/>
    <property type="match status" value="1"/>
</dbReference>
<dbReference type="SMART" id="SM00214">
    <property type="entry name" value="VWC"/>
    <property type="match status" value="3"/>
</dbReference>
<dbReference type="SMART" id="SM00215">
    <property type="entry name" value="VWC_out"/>
    <property type="match status" value="2"/>
</dbReference>
<dbReference type="SMART" id="SM00216">
    <property type="entry name" value="VWD"/>
    <property type="match status" value="4"/>
</dbReference>
<dbReference type="SUPFAM" id="SSF57603">
    <property type="entry name" value="FnI-like domain"/>
    <property type="match status" value="2"/>
</dbReference>
<dbReference type="SUPFAM" id="SSF57567">
    <property type="entry name" value="Serine protease inhibitors"/>
    <property type="match status" value="4"/>
</dbReference>
<dbReference type="PROSITE" id="PS01185">
    <property type="entry name" value="CTCK_1"/>
    <property type="match status" value="1"/>
</dbReference>
<dbReference type="PROSITE" id="PS01225">
    <property type="entry name" value="CTCK_2"/>
    <property type="match status" value="1"/>
</dbReference>
<dbReference type="PROSITE" id="PS01208">
    <property type="entry name" value="VWFC_1"/>
    <property type="match status" value="2"/>
</dbReference>
<dbReference type="PROSITE" id="PS50184">
    <property type="entry name" value="VWFC_2"/>
    <property type="match status" value="2"/>
</dbReference>
<dbReference type="PROSITE" id="PS51233">
    <property type="entry name" value="VWFD"/>
    <property type="match status" value="4"/>
</dbReference>
<keyword id="KW-0002">3D-structure</keyword>
<keyword id="KW-0068">Autocatalytic cleavage</keyword>
<keyword id="KW-0106">Calcium</keyword>
<keyword id="KW-0186">Copper</keyword>
<keyword id="KW-1015">Disulfide bond</keyword>
<keyword id="KW-0325">Glycoprotein</keyword>
<keyword id="KW-0597">Phosphoprotein</keyword>
<keyword id="KW-1267">Proteomics identification</keyword>
<keyword id="KW-1185">Reference proteome</keyword>
<keyword id="KW-0677">Repeat</keyword>
<keyword id="KW-0964">Secreted</keyword>
<keyword id="KW-0732">Signal</keyword>
<gene>
    <name evidence="21 24" type="primary">MUC2</name>
    <name type="synonym">SMUC</name>
</gene>
<name>MUC2_HUMAN</name>
<evidence type="ECO:0000250" key="1">
    <source>
        <dbReference type="UniProtKB" id="Q80Z19"/>
    </source>
</evidence>
<evidence type="ECO:0000250" key="2">
    <source>
        <dbReference type="UniProtKB" id="Q9HC84"/>
    </source>
</evidence>
<evidence type="ECO:0000255" key="3"/>
<evidence type="ECO:0000255" key="4">
    <source>
        <dbReference type="PROSITE-ProRule" id="PRU00039"/>
    </source>
</evidence>
<evidence type="ECO:0000255" key="5">
    <source>
        <dbReference type="PROSITE-ProRule" id="PRU00220"/>
    </source>
</evidence>
<evidence type="ECO:0000255" key="6">
    <source>
        <dbReference type="PROSITE-ProRule" id="PRU00580"/>
    </source>
</evidence>
<evidence type="ECO:0000256" key="7">
    <source>
        <dbReference type="SAM" id="MobiDB-lite"/>
    </source>
</evidence>
<evidence type="ECO:0000269" key="8">
    <source>
    </source>
</evidence>
<evidence type="ECO:0000269" key="9">
    <source>
    </source>
</evidence>
<evidence type="ECO:0000269" key="10">
    <source>
    </source>
</evidence>
<evidence type="ECO:0000269" key="11">
    <source>
    </source>
</evidence>
<evidence type="ECO:0000269" key="12">
    <source>
    </source>
</evidence>
<evidence type="ECO:0000269" key="13">
    <source>
    </source>
</evidence>
<evidence type="ECO:0000269" key="14">
    <source>
    </source>
</evidence>
<evidence type="ECO:0000269" key="15">
    <source>
    </source>
</evidence>
<evidence type="ECO:0000269" key="16">
    <source>
    </source>
</evidence>
<evidence type="ECO:0000269" key="17">
    <source>
    </source>
</evidence>
<evidence type="ECO:0000269" key="18">
    <source>
    </source>
</evidence>
<evidence type="ECO:0000269" key="19">
    <source>
    </source>
</evidence>
<evidence type="ECO:0000303" key="20">
    <source>
    </source>
</evidence>
<evidence type="ECO:0000303" key="21">
    <source>
    </source>
</evidence>
<evidence type="ECO:0000305" key="22"/>
<evidence type="ECO:0000305" key="23">
    <source>
    </source>
</evidence>
<evidence type="ECO:0000312" key="24">
    <source>
        <dbReference type="HGNC" id="HGNC:7512"/>
    </source>
</evidence>
<evidence type="ECO:0007744" key="25">
    <source>
        <dbReference type="PDB" id="6RBF"/>
    </source>
</evidence>
<evidence type="ECO:0007744" key="26">
    <source>
        <dbReference type="PDB" id="6TM2"/>
    </source>
</evidence>
<evidence type="ECO:0007744" key="27">
    <source>
        <dbReference type="PDB" id="6TM6"/>
    </source>
</evidence>
<evidence type="ECO:0007744" key="28">
    <source>
        <dbReference type="PDB" id="7A5O"/>
    </source>
</evidence>
<evidence type="ECO:0007744" key="29">
    <source>
        <dbReference type="PDB" id="7POV"/>
    </source>
</evidence>
<evidence type="ECO:0007744" key="30">
    <source>
        <dbReference type="PDB" id="7PP6"/>
    </source>
</evidence>
<evidence type="ECO:0007744" key="31">
    <source>
    </source>
</evidence>
<evidence type="ECO:0007829" key="32">
    <source>
        <dbReference type="PDB" id="6RBF"/>
    </source>
</evidence>
<evidence type="ECO:0007829" key="33">
    <source>
        <dbReference type="PDB" id="6TM2"/>
    </source>
</evidence>
<evidence type="ECO:0007829" key="34">
    <source>
        <dbReference type="PDB" id="6TM6"/>
    </source>
</evidence>
<evidence type="ECO:0007829" key="35">
    <source>
        <dbReference type="PDB" id="7PP6"/>
    </source>
</evidence>
<evidence type="ECO:0007829" key="36">
    <source>
        <dbReference type="PDB" id="7PRL"/>
    </source>
</evidence>
<evidence type="ECO:0007829" key="37">
    <source>
        <dbReference type="PDB" id="7QCL"/>
    </source>
</evidence>
<evidence type="ECO:0007829" key="38">
    <source>
        <dbReference type="PDB" id="7QCN"/>
    </source>
</evidence>
<evidence type="ECO:0007829" key="39">
    <source>
        <dbReference type="PDB" id="7QCU"/>
    </source>
</evidence>
<evidence type="ECO:0007829" key="40">
    <source>
        <dbReference type="PDB" id="8CK2"/>
    </source>
</evidence>
<evidence type="ECO:0007829" key="41">
    <source>
        <dbReference type="PDB" id="8S03"/>
    </source>
</evidence>
<proteinExistence type="evidence at protein level"/>
<reference key="1">
    <citation type="journal article" date="1994" name="J. Biol. Chem.">
        <title>Molecular cloning of human intestinal mucin (MUC2) cDNA. Identification of the amino terminus and overall sequence similarity to prepro-von Willebrand factor.</title>
        <authorList>
            <person name="Gum J.R. Jr."/>
            <person name="Hicks J.W."/>
            <person name="Toribara N.W."/>
            <person name="Siddiki B."/>
            <person name="Kim Y.S."/>
        </authorList>
    </citation>
    <scope>NUCLEOTIDE SEQUENCE [MRNA]</scope>
    <scope>TISSUE SPECIFICITY</scope>
    <source>
        <tissue>Intestine</tissue>
    </source>
</reference>
<reference key="2">
    <citation type="journal article" date="2006" name="Nature">
        <title>Human chromosome 11 DNA sequence and analysis including novel gene identification.</title>
        <authorList>
            <person name="Taylor T.D."/>
            <person name="Noguchi H."/>
            <person name="Totoki Y."/>
            <person name="Toyoda A."/>
            <person name="Kuroki Y."/>
            <person name="Dewar K."/>
            <person name="Lloyd C."/>
            <person name="Itoh T."/>
            <person name="Takeda T."/>
            <person name="Kim D.-W."/>
            <person name="She X."/>
            <person name="Barlow K.F."/>
            <person name="Bloom T."/>
            <person name="Bruford E."/>
            <person name="Chang J.L."/>
            <person name="Cuomo C.A."/>
            <person name="Eichler E."/>
            <person name="FitzGerald M.G."/>
            <person name="Jaffe D.B."/>
            <person name="LaButti K."/>
            <person name="Nicol R."/>
            <person name="Park H.-S."/>
            <person name="Seaman C."/>
            <person name="Sougnez C."/>
            <person name="Yang X."/>
            <person name="Zimmer A.R."/>
            <person name="Zody M.C."/>
            <person name="Birren B.W."/>
            <person name="Nusbaum C."/>
            <person name="Fujiyama A."/>
            <person name="Hattori M."/>
            <person name="Rogers J."/>
            <person name="Lander E.S."/>
            <person name="Sakaki Y."/>
        </authorList>
    </citation>
    <scope>NUCLEOTIDE SEQUENCE [LARGE SCALE GENOMIC DNA]</scope>
</reference>
<reference key="3">
    <citation type="journal article" date="1992" name="J. Biol. Chem.">
        <title>The human MUC2 intestinal mucin has cysteine-rich subdomains located both upstream and downstream of its central repetitive region.</title>
        <authorList>
            <person name="Gum J.R. Jr."/>
            <person name="Hicks J.W."/>
            <person name="Toribara N.W."/>
            <person name="Rothe E.-M."/>
            <person name="Lagace R.E."/>
            <person name="Kim Y.S."/>
        </authorList>
    </citation>
    <scope>NUCLEOTIDE SEQUENCE [MRNA] OF 626-1895 AND 4306-5289</scope>
    <source>
        <tissue>Colon</tissue>
    </source>
</reference>
<reference key="4">
    <citation type="journal article" date="1991" name="J. Clin. Invest.">
        <title>MUC-2 human small intestinal mucin gene structure. Repeated arrays and polymorphism.</title>
        <authorList>
            <person name="Toribara N.W."/>
            <person name="Gum J.R. Jr."/>
            <person name="Culhane P.J."/>
            <person name="Lagace R.E."/>
            <person name="Hicks J.W."/>
            <person name="Petersen G.M."/>
            <person name="Kim Y.S."/>
        </authorList>
    </citation>
    <scope>NUCLEOTIDE SEQUENCE [GENOMIC DNA] OF 1343-1895 AND 4286-4305</scope>
</reference>
<reference key="5">
    <citation type="journal article" date="1989" name="J. Biol. Chem.">
        <title>Molecular cloning of human intestinal mucin cDNAs. Sequence analysis and evidence for genetic polymorphism.</title>
        <authorList>
            <person name="Gum J.R. Jr."/>
            <person name="Byrd J.C."/>
            <person name="Hicks J.W."/>
            <person name="Toribara N.W."/>
            <person name="Lamport D.T.A."/>
            <person name="Kim Y.S."/>
        </authorList>
    </citation>
    <scope>NUCLEOTIDE SEQUENCE [MRNA] OF 4185-4462</scope>
</reference>
<reference key="6">
    <citation type="journal article" date="1992" name="Biochem. Biophys. Res. Commun.">
        <title>Human intestinal mucin-like protein (MLP) is homologous with rat MLP in the C-terminal region, and is encoded by a gene on chromosome 11 p 15.5.</title>
        <authorList>
            <person name="Xu G."/>
            <person name="Huan L."/>
            <person name="Khatri I."/>
            <person name="Sajjan U.S."/>
            <person name="McCool D."/>
            <person name="Wang D."/>
            <person name="Jones C."/>
            <person name="Forstner G."/>
            <person name="Forstner J."/>
        </authorList>
    </citation>
    <scope>NUCLEOTIDE SEQUENCE [MRNA] OF 4597-4737</scope>
</reference>
<reference key="7">
    <citation type="journal article" date="2001" name="Glycobiology">
        <title>In vivo glycosylation of mucin tandem repeats.</title>
        <authorList>
            <person name="Silverman H.S."/>
            <person name="Parry S."/>
            <person name="Sutton-Smith M."/>
            <person name="Burdick M.D."/>
            <person name="McDermott K."/>
            <person name="Reid C.J."/>
            <person name="Batra S.K."/>
            <person name="Morris H.R."/>
            <person name="Hollingsworth M.A."/>
            <person name="Dell A."/>
            <person name="Harris A."/>
        </authorList>
    </citation>
    <scope>STRUCTURE OF O-LINKED CARBOHYDRATES</scope>
</reference>
<reference key="8">
    <citation type="journal article" date="2002" name="J. Biol. Chem.">
        <title>The N terminus of the MUC2 mucin forms trimers that are held together within a trypsin-resistant core fragment.</title>
        <authorList>
            <person name="Godl K."/>
            <person name="Johansson M.E.V."/>
            <person name="Lidell M.E."/>
            <person name="Moergelin M."/>
            <person name="Karlsson H."/>
            <person name="Olson F.J."/>
            <person name="Gum J.R. Jr."/>
            <person name="Kim Y.S."/>
            <person name="Hansson G.C."/>
        </authorList>
    </citation>
    <scope>SUBUNIT</scope>
</reference>
<reference key="9">
    <citation type="journal article" date="2003" name="J. Biol. Chem.">
        <title>An autocatalytic cleavage in the C terminus of the human MUC2 mucin occurs at the low pH of the late secretory pathway.</title>
        <authorList>
            <person name="Lidell M.E."/>
            <person name="Johansson M.E.V."/>
            <person name="Hansson G.C."/>
        </authorList>
    </citation>
    <scope>AUTOCATALYTIC CLEAVAGE</scope>
</reference>
<reference key="10">
    <citation type="journal article" date="2006" name="J. Mol. Med.">
        <title>Aberrant intestinal expression and allelic variants of mucin genes associated with inflammatory bowel disease.</title>
        <authorList>
            <person name="Moehle C."/>
            <person name="Ackermann N."/>
            <person name="Langmann T."/>
            <person name="Aslanidis C."/>
            <person name="Kel A."/>
            <person name="Kel-Margoulis O."/>
            <person name="Schmitz-Madry A."/>
            <person name="Zahn A."/>
            <person name="Stremmel W."/>
            <person name="Schmitz G."/>
        </authorList>
    </citation>
    <scope>FUNCTION</scope>
</reference>
<reference key="11">
    <citation type="journal article" date="2008" name="Proc. Natl. Acad. Sci. U.S.A.">
        <title>A quantitative atlas of mitotic phosphorylation.</title>
        <authorList>
            <person name="Dephoure N."/>
            <person name="Zhou C."/>
            <person name="Villen J."/>
            <person name="Beausoleil S.A."/>
            <person name="Bakalarski C.E."/>
            <person name="Elledge S.J."/>
            <person name="Gygi S.P."/>
        </authorList>
    </citation>
    <scope>PHOSPHORYLATION [LARGE SCALE ANALYSIS] AT SER-21</scope>
    <scope>IDENTIFICATION BY MASS SPECTROMETRY [LARGE SCALE ANALYSIS]</scope>
    <source>
        <tissue>Cervix carcinoma</tissue>
    </source>
</reference>
<reference key="12">
    <citation type="journal article" date="2008" name="Arch. Microbiol.">
        <title>Listeria monocytogenes internalins bind to the human intestinal mucin MUC2.</title>
        <authorList>
            <person name="Linden S.K."/>
            <person name="Bierne H."/>
            <person name="Sabet C."/>
            <person name="Png C.W."/>
            <person name="Florin T.H."/>
            <person name="McGuckin M.A."/>
            <person name="Cossart P."/>
        </authorList>
    </citation>
    <scope>SUBUNIT (MICROBIAL INFECTION)</scope>
</reference>
<reference key="13">
    <citation type="journal article" date="2009" name="Proc. Natl. Acad. Sci. U.S.A.">
        <title>The protein disulfide isomerase AGR2 is essential for production of intestinal mucus.</title>
        <authorList>
            <person name="Park S.-W."/>
            <person name="Zhen G."/>
            <person name="Verhaeghe C."/>
            <person name="Nakagami Y."/>
            <person name="Nguyenvu L.T."/>
            <person name="Barczak A.J."/>
            <person name="Killeen N."/>
            <person name="Erle D.J."/>
        </authorList>
    </citation>
    <scope>INTERACTION WITH AGR2</scope>
</reference>
<reference key="14">
    <citation type="journal article" date="2009" name="J. Proteome Res.">
        <title>Proteomic analyses of the two mucus layers of the colon barrier reveal that their main component, the Muc2 mucin, is strongly bound to the Fcgbp protein.</title>
        <authorList>
            <person name="Johansson M.E.V."/>
            <person name="Thomsson K.A."/>
            <person name="Hansson G.C."/>
        </authorList>
    </citation>
    <scope>IDENTIFICATION BY MASS SPECTROMETRY</scope>
    <scope>FUNCTION</scope>
    <scope>INTERACTION WITH FCGBP</scope>
</reference>
<reference evidence="25" key="15">
    <citation type="journal article" date="2019" name="J. Mol. Biol.">
        <title>Intestinal gel-forming Mucins polymerize by disulfide-mediated dimerization of D3 domains.</title>
        <authorList>
            <person name="Javitt G."/>
            <person name="Calvo M.L.G."/>
            <person name="Albert L."/>
            <person name="Reznik N."/>
            <person name="Ilani T."/>
            <person name="Diskin R."/>
            <person name="Fass D."/>
        </authorList>
    </citation>
    <scope>X-RAY CRYSTALLOGRAPHY (2.70 ANGSTROMS) OF 858-1259</scope>
    <scope>DISULFIDE BOND</scope>
    <scope>GLYCOSYLATION AT ASN-894 AND ASN-1154</scope>
</reference>
<reference evidence="27 28" key="16">
    <citation type="journal article" date="2020" name="Cell">
        <title>Assembly Mechanism of Mucin and von Willebrand Factor Polymers.</title>
        <authorList>
            <person name="Javitt G."/>
            <person name="Khmelnitsky L."/>
            <person name="Albert L."/>
            <person name="Bigman L.S."/>
            <person name="Elad N."/>
            <person name="Morgenstern D."/>
            <person name="Ilani T."/>
            <person name="Levy Y."/>
            <person name="Diskin R."/>
            <person name="Fass D."/>
        </authorList>
    </citation>
    <scope>X-RAY CRYSTALLOGRAPHY (1.63 ANGSTROMS) OF 21-1395 IN COMPLEX WITH CA(2+)</scope>
    <scope>FUNCTION</scope>
    <scope>SUBCELLULAR LOCATION</scope>
    <scope>SUBUNIT</scope>
    <scope>GLYCOSYLATION AT ASN-163; ASN-670; ASN-1154 AND THR-1266; THR-1267; THR-1269; THR-1270; THR-1272; THR-1275; THR-1276; THR-1281; THR-1282; THR-1287; SER-1291; SER-1292; THR-1293; SER-1296 AND THR-1297</scope>
    <scope>MUTAGENESIS OF CYS-1088 AND CYS-1130</scope>
</reference>
<reference evidence="29 30" key="17">
    <citation type="journal article" date="2022" name="Proc. Natl. Acad. Sci. U.S.A.">
        <title>Helical self-assembly of a mucin segment suggests an evolutionary origin for von Willebrand factor tubules.</title>
        <authorList>
            <person name="Javitt G."/>
            <person name="Fass D."/>
        </authorList>
    </citation>
    <scope>STRUCTURE BY ELECTRON MICROSCOPY (3.40 ANGSTROMS) OF 21-1259 IN COMPLEX WITH CA(2+)</scope>
    <scope>GLYCOSYLATION AT ASN-163; ASN-670 AND ASN-1154</scope>
</reference>
<reference key="18">
    <citation type="journal article" date="2022" name="Cell">
        <title>Intestinal mucin is a chaperone of multivalent copper.</title>
        <authorList>
            <person name="Reznik N."/>
            <person name="Gallo A.D."/>
            <person name="Rush K.W."/>
            <person name="Javitt G."/>
            <person name="Fridmann-Sirkis Y."/>
            <person name="Ilani T."/>
            <person name="Nairner N.A."/>
            <person name="Fishilevich S."/>
            <person name="Gokhman D."/>
            <person name="Chacon K.N."/>
            <person name="Franz K.J."/>
            <person name="Fass D."/>
        </authorList>
    </citation>
    <scope>X-RAY CRYSTALLOGRAPHY (2.48 ANGSTROMS) IN COMPLEX WITH CU(2+)</scope>
    <scope>FUNCTION</scope>
    <scope>COPPER-BINDING</scope>
    <scope>MUTAGENESIS OF HIS-32; HIS-34; MET-146; MET-154; HIS-277; GLU-322 AND MET-326</scope>
</reference>
<organism>
    <name type="scientific">Homo sapiens</name>
    <name type="common">Human</name>
    <dbReference type="NCBI Taxonomy" id="9606"/>
    <lineage>
        <taxon>Eukaryota</taxon>
        <taxon>Metazoa</taxon>
        <taxon>Chordata</taxon>
        <taxon>Craniata</taxon>
        <taxon>Vertebrata</taxon>
        <taxon>Euteleostomi</taxon>
        <taxon>Mammalia</taxon>
        <taxon>Eutheria</taxon>
        <taxon>Euarchontoglires</taxon>
        <taxon>Primates</taxon>
        <taxon>Haplorrhini</taxon>
        <taxon>Catarrhini</taxon>
        <taxon>Hominidae</taxon>
        <taxon>Homo</taxon>
    </lineage>
</organism>
<comment type="function">
    <text evidence="1 11 14 16 18">Coats the epithelia of the intestines and other mucus membrane-containing organs to provide a protective, lubricating barrier against particles and infectious agents at mucosal surfaces (PubMed:17058067, PubMed:19432394, PubMed:33031746). Major constituent of the colon mucus, which is mainly formed by large polymeric networks of MUC2 secreted by goblet cells that cover the exposed surfaces of intestine (PubMed:19432394, PubMed:33031746). MUC2 networks form hydrogels that guard the underlying epithelium from pathogens and other hazardous matter entering from the outside world, while permitting nutrient absorption and gas exchange (PubMed:33031746, PubMed:36206754). Acts as a divalent copper chaperone that protects intestinal cells from copper toxicity and facilitates nutritional copper unptake into cells (PubMed:36206754). Binds both Cu(2+) and its reduced form, Cu(1+), at two juxtaposed binding sites: Cu(2+), once reduced to Cu(1+) by vitamin C (ascorbate) or other dietary antioxidants, transits to the other binding site (PubMed:36206754). MUC2-bound Cu(1+) is protected from oxidation in aerobic environments, and can be released for nutritional delivery to cells (PubMed:36206754). Mucin gels store antimicrobial molecules that participate in innate immunity (PubMed:33031746). Mucin glycoproteins also house and feed the microbiome, lubricate tissue surfaces, and may facilitate the removal of contaminants and waste products from the body (PubMed:33031746). Goblet cells synthesize two forms of MUC2 mucin that differ in branched chain O-glycosylation and the site of production in the colon: a (1) 'thick' mucus that wraps the microbiota to form fecal pellets is produced in the proximal, ascending colon (By similarity). 'Thick' mucus transits along the descending colon and is lubricated by a (2) 'thin' MUC2 mucus produced in the distal colon which adheres to the 'thick' mucus (By similarity).</text>
</comment>
<comment type="subunit">
    <text evidence="2 9 13 14 15 16 17">Homomultimer; disulfide-linked (PubMed:12374796, PubMed:31310764, PubMed:33031746, PubMed:35377815). The N- and C-terminus mediate their assembly into higher order structures to form filaments (PubMed:33031746, PubMed:35377815). The CTCK domains of two polypeptides associate in the endoplasmic reticulum to generate intermolecularly disulfide-bonded dimers (By similarity). These dimers progress to the Golgi apparatus, which is a more acidic environment than the endoplasmic reticulum (PubMed:33031746). Under acidic conditions, the N-termini form non-covalent intermolecular interactions that juxtapose assemblies of the third VWD domain (VWD3) from different CTCK-linked dimers (PubMed:33031746). The VWD3 assemblies then become disulfide bonded to one another to produce long, disulfide-linked polymers that remain highly compact until secretion (PubMed:33031746). Interacts with FCGBP (PubMed:19432394). Interacts with AGR2; disulfide-linked (PubMed:19359471).</text>
</comment>
<comment type="subunit">
    <text evidence="12">(Microbial infection) Interacts in vitro with L.monocytogenes internalin proteins InlB, InlC and InlJ; for InlC binding is slightly better at pH 5.5, (the pH of the intestine) than at pH 7.4.</text>
</comment>
<comment type="interaction">
    <interactant intactId="EBI-2105803">
        <id>Q02817</id>
    </interactant>
    <interactant intactId="EBI-712648">
        <id>O95994</id>
        <label>AGR2</label>
    </interactant>
    <organismsDiffer>false</organismsDiffer>
    <experiments>3</experiments>
</comment>
<comment type="subcellular location">
    <subcellularLocation>
        <location evidence="16">Secreted</location>
    </subcellularLocation>
    <text evidence="1 16">In the intestine, secreted into the inner and outer mucus layers (By similarity). Before secretion, mucin polymers are stored in dedicated secretory vesicles (PubMed:33031746).</text>
</comment>
<comment type="tissue specificity">
    <text evidence="19">Colon, small intestine, colonic tumors, bronchus, cervix and gall bladder.</text>
</comment>
<comment type="domain">
    <text evidence="2">The CTCK domain mediates interchain disulfide bonds with another molecule of MUC2.</text>
</comment>
<comment type="PTM">
    <text evidence="1 8 16">O-glycosylated (PubMed:11445551, PubMed:33031746). O-glycosylation is required for mucin assembly (PubMed:33031746). Goblet cells synthesize two forms of mucin that differ in branched chain O-glycosylation and the site of production in the colon (By similarity).</text>
</comment>
<comment type="PTM">
    <text evidence="1">May undergo proteolytic cleavage in the outer mucus layer of the colon, contributing to the expanded volume and loose nature of this layer which allows for bacterial colonization in contrast to the inner mucus layer which is dense and devoid of bacteria.</text>
</comment>
<comment type="PTM">
    <text evidence="10">At low pH of 6 and under, undergoes autocatalytic cleavage in vitro in the N-terminal region of the fourth VWD domain. It is likely that this also occurs in vivo and is triggered by the low pH of the late secretory pathway.</text>
</comment>
<comment type="polymorphism">
    <text>The number of repeats is highly polymorphic and varies among different alleles.</text>
</comment>
<comment type="online information" name="Mucin database">
    <link uri="http://www.medkem.gu.se/mucinbiology/databases/"/>
</comment>
<comment type="online information" name="Atlas of Genetics and Cytogenetics in Oncology and Haematology">
    <link uri="https://atlasgeneticsoncology.org/gene/41457/MUC2"/>
</comment>
<protein>
    <recommendedName>
        <fullName evidence="21">Mucin-2</fullName>
        <shortName evidence="20">MUC-2</shortName>
    </recommendedName>
    <alternativeName>
        <fullName evidence="21">Intestinal mucin-2</fullName>
    </alternativeName>
</protein>
<sequence>MGLPLARLAAVCLALSLAGGSELQTEGRTRNHGHNVCSTWGNFHYKTFDGDVFRFPGLCDYNFASDCRGSYKEFAVHLKRGPGQAEAPAGVESILLTIKDDTIYLTRHLAVLNGAVVSTPHYSPGLLIEKSDAYTKVYSRAGLTLMWNREDALMLELDTKFRNHTCGLCGDYNGLQSYSEFLSDGVLFSPLEFGNMQKINQPDVVCEDPEEEVAPASCSEHRAECERLLTAEAFADCQDLVPLEPYLRACQQDRCRCPGGDTCVCSTVAEFSRQCSHAGGRPGNWRTATLCPKTCPGNLVYLESGSPCMDTCSHLEVSSLCEEHRMDGCFCPEGTVYDDIGDSGCVPVSQCHCRLHGHLYTPGQEITNDCEQCVCNAGRWVCKDLPCPGTCALEGGSHITTFDGKTYTFHGDCYYVLAKGDHNDSYALLGELAPCGSTDKQTCLKTVVLLADKKKNVVVFKSDGSVLLNELQVNLPHVTASFSVFRPSSYHIMVSMAIGVRLQVQLAPVMQLFVTLDQASQGQVQGLCGNFNGLEGDDFKTASGLVEATGAGFANTWKAQSSCHDKLDWLDDPCSLNIESANYAEHWCSLLKKTETPFGRCHSAVDPAEYYKRCKYDTCNCQNNEDCLCAALSSYARACTAKGVMLWGWREHVCNKDVGSCPNSQVFLYNLTTCQQTCRSLSEADSHCLEGFAPVDGCGCPDHTFLDEKGRCVPLAKCSCYHRGLYLEAGDVVVRQEERCVCRDGRLHCRQIRLIGQSCTAPKIHMDCSNLTALATSKPRALSCQTLAAGYYHTECVSGCVCPDGLMDDGRGGCVVEKECPCVHNNDLYSSGAKIKVDCNTCTCKRGRWVCTQAVCHGTCSIYGSGHYITFDGKYYDFDGHCSYVAVQDYCGQNSSLGSFSIITENVPCGTTGVTCSKAIKIFMGRTELKLEDKHRVVIQRDEGHHVAYTTREVGQYLVVESSTGIIVIWDKRTTVFIKLAPSYKGTVCGLCGNFDHRSNNDFTTRDHMVVSSELDFGNSWKEAPTCPDVSTNPEPCSLNPHRRSWAEKQCSILKSSVFSICHSKVDPKPFYEACVHDSCSCDTGGDCECFCSAVASYAQECTKEGACVFWRTPDLCPIFCDYYNPPHECEWHYEPCGNRSFETCRTINGIHSNISVSYLEGCYPRCPKDRPIYEEDLKKCVTADKCGCYVEDTHYPPGASVPTEETCKSCVCTNSSQVVCRPEEGKILNQTQDGAFCYWEICGPNGTVEKHFNICSITTRPSTLTTFTTITLPTTPTTFTTTTTTTTPTSSTVLSTTPKLCCLWSDWINEDHPSSGSDDGDRETFDGVCGAPEDIECRSVKDPHLSLEQLGQKVQCDVSVGFICKNEDQFGNGPFGLCYDYKIRVNCCWPMDKCITTPSPPTTTPSPPPTSTTTLPPTTTPSPPTTTTTTPPPTTTPSPPITTTTTPPPTTTPSPPISTTTTPPPTTTPSPPTTTPSPPTTTPSPPTTTTTTPPPTTTPSPPTTTPITPPASTTTLPPTTTPSPPTTTTTTPPPTTTPSPPTTTPITPPTSTTTLPPTTTPSPPPTTTTTPPPTTTPSPPTTTTPSPPTITTTTPPPTTTPSPPTTTTTTPPPTTTPSPPTTTPITPPTSTTTLPPTTTPSPPPTTTTTPPPTTTPSPPTTTTPSPPITTTTTPPPTTTPSSPITTTPSPPTTTMTTPSPTTTPSSPITTTTTPSSTTTPSPPPTTMTTPSPTTTPSPPTTTMTTLPPTTTSSPLTTTPLPPSITPPTFSPFSTTTPTTPCVPLCNWTGWLDSGKPNFHKPGGDTELIGDVCGPGWAANISCRATMYPDVPIGQLGQTVVCDVSVGLICKNEDQKPGGVIPMAFCLNYEINVQCCECVTQPTTMTTTTTENPTPTPITTTTTVTPTPTPTSTQSTTPTPITTTNTVTPTPTPTGTQTPTPTPITTTTTMVTPTPTITSTQTPTPTPITTTTVTPTPTPTSTQRTTPTSITTTTTVTPTPTPTGTQTPTTTPITTTTTVTPTPTPTGTQTPTTTPISTTTMVTPTPTPTGTQTLTPTPITTTTTVTPTPTPTGTQTPTSTPISTTTTVTPTPTPTGTQTPTLTPITTTTTVTPTPTPTGTQTPTTTPITTTTTVTPTPTPTGTKSTTPTSITTTTMVTPTPPPTGTQTPTTTPITTTTTVTPTPTPTGTQTPTPTPITTTTTVTPTPTPTGTQTPTSTPITTNTTVTPTPTPTGTPSTTLTPITTTTMVTPTPTPTGTQTPTSTPISTTTTVTPTPTPTGTQTPTPTPISTTTTVTPTPTPTSTQTPTTTPITTTTTVTPNPTPTGTQTPTTTPITTTTTVTPTPTPTGTQTPTTTPISTTTTVTPTPTPTGTQTPTTTAITTTTTVTPTPTPTGTQTPTSTPITTTTTVTPTPTPTGTQTPTSTPISNTTTVTPTPTPTGTQTPTVTPITTTTTVTPTRTPTGTKSTTPTSITTTTMVTPTPTPTGTHTPTTTPITTTTTVTPTPTPTGTQTPTPTPITTTTTVTPTPTPTGTQTPTSTPITTTTTVTPTPTPTGTQTPTTTPITTNTTVTPTPTPTGTQTPTTVLITTTTTMTPTPTPTSTKSTTVTPITTTTTVTPTPTPTGTQSTTLTPITTTTTVTPTPTPTGTQTPTTTPISTTTTVIPTPTPTGTQTPTSTPITTTTTVTPTPTPTGTQTPTSTPISTTTTVTPTATPTGTQTPTLTPITTTTTVTSTPTPTGTQTPTPTPITTTTTVTPTPTPTSTQTPTSTPITTTTTVTPTPTPTGTQTPTTTHITTTTTVTPTPTPTGTQAPTPTAITTTTTVTPTPTPTGTQTPTTTPITTTTTVTPTPTPTGTQSPTPTAITTTTTVTPTPTPTGTQTPTTTPITTTTTVTPTPTPTGTQSTTLTPITTTTTVTPIPTPTGTQTPTSTPITTTITVTPTPTPTGTQTPTPTPISTTTTVTPTPTPTGTQTPTTTPITTTTTVTPTPTPTGTQTPTTTPISTTTTVTPTPTPTGTQTPTSTPITTTTTVTPTPTPTGTQTPTPTPITTTTTVTPTPTPTGTQTPTSTPITTTTTVTPTPTPTGTQTPTPTPITTTTTVTPTPTPTGTQTPTSTPITTTTTVTPTPTPTGTQTPTTTPITTTTTVTPTPTPTGTQSTTLTPITTTTTVTPTPTPTGTQTPTSTPITTTTTVTPTPTGTQTPTPTPISTTTTVTPTPTPTGTQTPTMTPITTTTTVTPTPTPTGTQTPTTTPISTTTTVTPTPTPTGTQTPTSTPITTTTTVTPTPTPTGTQTPTTTPITTTTTVTPTPTPTGTQSTTLTPITTTTTVTPTPTPTGTQTPTPTPISTTTTVTPTPTPTGTQTPTTTPITTTTTVTPTPTPTGTQTPTTTPISTTTTVTPTPTPTGTQTPTSTPITTTTTVTPTPTPTGTQTPTTTPITTTTTVTPTPTPTGTQAPTPTAITTTTTVTPTPTPTGTQTPTTTPITTTTMVTPTPTPTGTQTPTSTPITTTTTVTPTPTPTGTQTPTPTPISTTTTVTPTPTPTGTQTPTTTPITTTTTVTPTPTPTGTQTPTTTPISTTTTVTPTPTPTGTQTPTSTPITTTTTVTPTPTPTGTQTPTPTPITTTTTVTPTPTPTGTQTPTSTPITTTTTVTPTPTPTGTQTPTTTPITTTTTVTPTPTPTGTQSTTLTPITTTTTVTPTPTPTGTQTPTSTPITTTTTVTPTPTPTGTQTPTPTPISTTSTVTPTPTPTGTQTPTMTPITTTTTVTPTPTPTGTQTPTSTPITTTTTVTPTPTPTGTQTPTMTPITTTTTVTPTPTPTGTQAPTPTAITTTTTVTPTPTPTGTQTPTTTPITTTTTVTPTPTPTGTQSTTLTPITTTTTVTPTPTPTGTQTPTPTPISTTTTVTPTPTPTGTQTPTMTPITTTTTVTPTPTPTGTQTPTTTPISTTTTVTPTPTPTGTQTPTTTPITTTTTVTPTPTPTGTQTPTTTPISTTTTVTPTPTPTGTQTPTTTPITTTTTVTPTPTPTGTQTPTTTPISTTTTVTPTPTPTGTQTPTSTPITTTTTVTPTPTPTGTQTPTTTPITTTTTVTPTPTPTGTQAPTPTAITTTSTVTPTPTPTGTQTPTTTPITTTTTVTPTPTPTGTQSPTPTAITTTTTVTPTPTPTGTQTPTLTPITTTTTVTPTPTPTGTQTPTPTPISTTTTVTPTPTPTGTQTPTTTPITTTTTVTPTPTPTGTQTPTTVLITTTTTMTPTPTPTSTKSTTVTPITTTTTVTATPTPTGTQTPTMIPISTTTTVTPTPTPTTGSTGPPTHTSTAPIAELTTSNPPPESSTPQTSRSTSSPLTESTTLLSTLPPAIEMTSTAPPSTPTAPTTTSGGHTLSPPPSTTTSPPGTPTRGTTTGSSSAPTPSTVQTTTTSAWTPTPTPLSTPSIIRTTGLRPYPSSVLICCVLNDTYYAPGEEVYNGTYGDTCYFVNCSLSCTLEFYNWSCPSTPSPTPTPSKSTPTPSKPSSTPSKPTPGTKPPECPDFDPPRQENETWWLCDCFMATCKYNNTVEIVKVECEPPPMPTCSNGLQPVRVEDPDGCCWHWECDCYCTGWGDPHYVTFDGLYYSYQGNCTYVLVEEISPSVDNFGVYIDNYHCDPNDKVSCPRTLIVRHETQEVLIKTVHMMPMQVQVQVNRQAVALPYKKYGLEVYQSGINYVVDIPELGVLVSYNGLSFSVRLPYHRFGNNTKGQCGTCTNTTSDDCILPSGEIVSNCEAAADQWLVNDPSKPHCPHSSSTTKRPAVTVPGGGKTTPHKDCTPSPLCQLIKDSLFAQCHALVPPQHYYDACVFDSCFMPGSSLECASLQAYAALCAQQNICLDWRNHTHGACLVECPSHREYQACGPAEEPTCKSSSSQQNNTVLVEGCFCPEGTMNYAPGFDVCVKTCGCVGPDNVPREFGEHFEFDCKNCVCLEGGSGIICQPKRCSQKPVTHCVEDGTYLATEVNPADTCCNITVCKCNTSLCKEKPSVCPLGFEVKSKMVPGRCCPFYWCESKGVCVHGNAEYQPGSPVYSSKCQDCVCTDKVDNNTLLNVIACTHVPCNTSCSPGFELMEAPGECCKKCEQTHCIIKRPDNQHVILKPGDFKSDPKNNCTFFSCVKIHNQLISSVSNITCPNFDASICIPGSITFMPNGCCKTCTPRNETRVPCSTVPVTTEVSYAGCTKTVLMNHCSGSCGTFVMYSAKAQALDHSCSCCKEEKTSQREVVLSCPNGGSLTHTYTHIESCQCQDTVCGLPTGTSRRARRSPRHLGSG</sequence>